<dbReference type="EC" id="3.1.1.7" evidence="5"/>
<dbReference type="EMBL" id="M55040">
    <property type="protein sequence ID" value="AAA68151.1"/>
    <property type="molecule type" value="mRNA"/>
</dbReference>
<dbReference type="EMBL" id="S71129">
    <property type="protein sequence ID" value="AAC60618.1"/>
    <property type="status" value="ALT_SEQ"/>
    <property type="molecule type" value="Genomic_DNA"/>
</dbReference>
<dbReference type="EMBL" id="AF334270">
    <property type="protein sequence ID" value="AAO32948.1"/>
    <property type="molecule type" value="mRNA"/>
</dbReference>
<dbReference type="EMBL" id="AK291321">
    <property type="protein sequence ID" value="BAF84010.1"/>
    <property type="molecule type" value="mRNA"/>
</dbReference>
<dbReference type="EMBL" id="AK223443">
    <property type="protein sequence ID" value="BAD97163.1"/>
    <property type="molecule type" value="mRNA"/>
</dbReference>
<dbReference type="EMBL" id="AY750146">
    <property type="protein sequence ID" value="AAU43801.1"/>
    <property type="molecule type" value="Genomic_DNA"/>
</dbReference>
<dbReference type="EMBL" id="AC011895">
    <property type="protein sequence ID" value="AAP22364.1"/>
    <property type="molecule type" value="Genomic_DNA"/>
</dbReference>
<dbReference type="EMBL" id="AC011895">
    <property type="protein sequence ID" value="AAP22365.1"/>
    <property type="molecule type" value="Genomic_DNA"/>
</dbReference>
<dbReference type="EMBL" id="CH236956">
    <property type="protein sequence ID" value="EAL23812.1"/>
    <property type="molecule type" value="Genomic_DNA"/>
</dbReference>
<dbReference type="EMBL" id="CH236956">
    <property type="protein sequence ID" value="EAL23813.1"/>
    <property type="molecule type" value="Genomic_DNA"/>
</dbReference>
<dbReference type="EMBL" id="CH471091">
    <property type="protein sequence ID" value="EAW76461.1"/>
    <property type="molecule type" value="Genomic_DNA"/>
</dbReference>
<dbReference type="EMBL" id="CH471091">
    <property type="protein sequence ID" value="EAW76463.1"/>
    <property type="molecule type" value="Genomic_DNA"/>
</dbReference>
<dbReference type="EMBL" id="CH471091">
    <property type="protein sequence ID" value="EAW76462.1"/>
    <property type="molecule type" value="Genomic_DNA"/>
</dbReference>
<dbReference type="EMBL" id="BC036813">
    <property type="protein sequence ID" value="AAH36813.1"/>
    <property type="molecule type" value="mRNA"/>
</dbReference>
<dbReference type="EMBL" id="BC105060">
    <property type="protein sequence ID" value="AAI05061.1"/>
    <property type="molecule type" value="mRNA"/>
</dbReference>
<dbReference type="EMBL" id="BC105062">
    <property type="protein sequence ID" value="AAI05063.1"/>
    <property type="molecule type" value="mRNA"/>
</dbReference>
<dbReference type="EMBL" id="BC143469">
    <property type="protein sequence ID" value="AAI43470.1"/>
    <property type="molecule type" value="mRNA"/>
</dbReference>
<dbReference type="EMBL" id="AF312032">
    <property type="protein sequence ID" value="AAK21003.1"/>
    <property type="molecule type" value="Genomic_DNA"/>
</dbReference>
<dbReference type="CCDS" id="CCDS5709.1">
    <molecule id="P22303-1"/>
</dbReference>
<dbReference type="CCDS" id="CCDS5710.1">
    <molecule id="P22303-2"/>
</dbReference>
<dbReference type="CCDS" id="CCDS64736.1">
    <molecule id="P22303-3"/>
</dbReference>
<dbReference type="PIR" id="A39256">
    <property type="entry name" value="A39256"/>
</dbReference>
<dbReference type="RefSeq" id="NP_000656.1">
    <molecule id="P22303-1"/>
    <property type="nucleotide sequence ID" value="NM_000665.5"/>
</dbReference>
<dbReference type="RefSeq" id="NP_001269378.1">
    <molecule id="P22303-3"/>
    <property type="nucleotide sequence ID" value="NM_001282449.2"/>
</dbReference>
<dbReference type="RefSeq" id="NP_001289550.1">
    <molecule id="P22303-2"/>
    <property type="nucleotide sequence ID" value="NM_001302621.3"/>
</dbReference>
<dbReference type="RefSeq" id="NP_001289551.1">
    <molecule id="P22303-1"/>
    <property type="nucleotide sequence ID" value="NM_001302622.2"/>
</dbReference>
<dbReference type="RefSeq" id="NP_001354844.1">
    <molecule id="P22303-1"/>
    <property type="nucleotide sequence ID" value="NM_001367915.1"/>
</dbReference>
<dbReference type="RefSeq" id="NP_001354846.1">
    <molecule id="P22303-1"/>
    <property type="nucleotide sequence ID" value="NM_001367917.1"/>
</dbReference>
<dbReference type="RefSeq" id="NP_056646.1">
    <property type="nucleotide sequence ID" value="NM_015831.2"/>
</dbReference>
<dbReference type="RefSeq" id="XP_006716058.1">
    <property type="nucleotide sequence ID" value="XM_006715995.2"/>
</dbReference>
<dbReference type="RefSeq" id="XP_011514530.1">
    <property type="nucleotide sequence ID" value="XM_011516228.2"/>
</dbReference>
<dbReference type="RefSeq" id="XP_011514531.1">
    <property type="nucleotide sequence ID" value="XM_011516229.2"/>
</dbReference>
<dbReference type="PDB" id="1B41">
    <property type="method" value="X-ray"/>
    <property type="resolution" value="2.76 A"/>
    <property type="chains" value="A=36-574"/>
</dbReference>
<dbReference type="PDB" id="1F8U">
    <property type="method" value="X-ray"/>
    <property type="resolution" value="2.90 A"/>
    <property type="chains" value="A=32-614"/>
</dbReference>
<dbReference type="PDB" id="1VZJ">
    <property type="method" value="X-ray"/>
    <property type="resolution" value="2.35 A"/>
    <property type="chains" value="A/B/C/D/E/F/G/H=575-614"/>
</dbReference>
<dbReference type="PDB" id="2X8B">
    <property type="method" value="X-ray"/>
    <property type="resolution" value="2.95 A"/>
    <property type="chains" value="A=32-614"/>
</dbReference>
<dbReference type="PDB" id="3LII">
    <property type="method" value="X-ray"/>
    <property type="resolution" value="3.20 A"/>
    <property type="chains" value="A/B=35-574"/>
</dbReference>
<dbReference type="PDB" id="4BDT">
    <property type="method" value="X-ray"/>
    <property type="resolution" value="3.10 A"/>
    <property type="chains" value="A=32-614"/>
</dbReference>
<dbReference type="PDB" id="4EY4">
    <property type="method" value="X-ray"/>
    <property type="resolution" value="2.16 A"/>
    <property type="chains" value="A/B=33-574"/>
</dbReference>
<dbReference type="PDB" id="4EY5">
    <property type="method" value="X-ray"/>
    <property type="resolution" value="2.30 A"/>
    <property type="chains" value="A/B=33-574"/>
</dbReference>
<dbReference type="PDB" id="4EY6">
    <property type="method" value="X-ray"/>
    <property type="resolution" value="2.40 A"/>
    <property type="chains" value="A/B=33-574"/>
</dbReference>
<dbReference type="PDB" id="4EY7">
    <property type="method" value="X-ray"/>
    <property type="resolution" value="2.35 A"/>
    <property type="chains" value="A/B=33-574"/>
</dbReference>
<dbReference type="PDB" id="4EY8">
    <property type="method" value="X-ray"/>
    <property type="resolution" value="2.60 A"/>
    <property type="chains" value="A=33-574"/>
</dbReference>
<dbReference type="PDB" id="4M0E">
    <property type="method" value="X-ray"/>
    <property type="resolution" value="2.00 A"/>
    <property type="chains" value="A/B=33-574"/>
</dbReference>
<dbReference type="PDB" id="4M0F">
    <property type="method" value="X-ray"/>
    <property type="resolution" value="2.30 A"/>
    <property type="chains" value="A/B=33-574"/>
</dbReference>
<dbReference type="PDB" id="4PQE">
    <property type="method" value="X-ray"/>
    <property type="resolution" value="2.90 A"/>
    <property type="chains" value="A=32-574"/>
</dbReference>
<dbReference type="PDB" id="5FOQ">
    <property type="method" value="X-ray"/>
    <property type="resolution" value="2.30 A"/>
    <property type="chains" value="A/B=32-576"/>
</dbReference>
<dbReference type="PDB" id="5FPQ">
    <property type="method" value="X-ray"/>
    <property type="resolution" value="2.40 A"/>
    <property type="chains" value="A/B=33-574"/>
</dbReference>
<dbReference type="PDB" id="5HF5">
    <property type="method" value="X-ray"/>
    <property type="resolution" value="2.15 A"/>
    <property type="chains" value="A/B=33-574"/>
</dbReference>
<dbReference type="PDB" id="5HF6">
    <property type="method" value="X-ray"/>
    <property type="resolution" value="2.30 A"/>
    <property type="chains" value="A/B=33-574"/>
</dbReference>
<dbReference type="PDB" id="5HF8">
    <property type="method" value="X-ray"/>
    <property type="resolution" value="2.80 A"/>
    <property type="chains" value="A/B=33-574"/>
</dbReference>
<dbReference type="PDB" id="5HF9">
    <property type="method" value="X-ray"/>
    <property type="resolution" value="2.20 A"/>
    <property type="chains" value="A/B=33-574"/>
</dbReference>
<dbReference type="PDB" id="5HFA">
    <property type="method" value="X-ray"/>
    <property type="resolution" value="2.20 A"/>
    <property type="chains" value="A/B=33-574"/>
</dbReference>
<dbReference type="PDB" id="5HQ3">
    <property type="method" value="X-ray"/>
    <property type="resolution" value="2.60 A"/>
    <property type="chains" value="A=32-578, B=32-579"/>
</dbReference>
<dbReference type="PDB" id="6CQT">
    <property type="method" value="X-ray"/>
    <property type="resolution" value="2.27 A"/>
    <property type="chains" value="A/B=33-574"/>
</dbReference>
<dbReference type="PDB" id="6CQU">
    <property type="method" value="X-ray"/>
    <property type="resolution" value="2.31 A"/>
    <property type="chains" value="A/B=33-574"/>
</dbReference>
<dbReference type="PDB" id="6CQV">
    <property type="method" value="X-ray"/>
    <property type="resolution" value="2.60 A"/>
    <property type="chains" value="A/B=33-574"/>
</dbReference>
<dbReference type="PDB" id="6CQW">
    <property type="method" value="X-ray"/>
    <property type="resolution" value="2.28 A"/>
    <property type="chains" value="A/B=33-574"/>
</dbReference>
<dbReference type="PDB" id="6CQX">
    <property type="method" value="X-ray"/>
    <property type="resolution" value="2.40 A"/>
    <property type="chains" value="A/B=33-574"/>
</dbReference>
<dbReference type="PDB" id="6CQY">
    <property type="method" value="X-ray"/>
    <property type="resolution" value="2.45 A"/>
    <property type="chains" value="A/B=33-574"/>
</dbReference>
<dbReference type="PDB" id="6CQZ">
    <property type="method" value="X-ray"/>
    <property type="resolution" value="2.22 A"/>
    <property type="chains" value="A/B=33-574"/>
</dbReference>
<dbReference type="PDB" id="6F25">
    <property type="method" value="X-ray"/>
    <property type="resolution" value="3.05 A"/>
    <property type="chains" value="A/B=36-574"/>
</dbReference>
<dbReference type="PDB" id="6NEA">
    <property type="method" value="X-ray"/>
    <property type="resolution" value="2.42 A"/>
    <property type="chains" value="A/B=33-574"/>
</dbReference>
<dbReference type="PDB" id="6NTG">
    <property type="method" value="X-ray"/>
    <property type="resolution" value="2.65 A"/>
    <property type="chains" value="A/B=33-574"/>
</dbReference>
<dbReference type="PDB" id="6NTH">
    <property type="method" value="X-ray"/>
    <property type="resolution" value="2.42 A"/>
    <property type="chains" value="A/B=33-574"/>
</dbReference>
<dbReference type="PDB" id="6NTK">
    <property type="method" value="X-ray"/>
    <property type="resolution" value="2.41 A"/>
    <property type="chains" value="A/B=33-574"/>
</dbReference>
<dbReference type="PDB" id="6NTL">
    <property type="method" value="X-ray"/>
    <property type="resolution" value="2.25 A"/>
    <property type="chains" value="A/B=33-574"/>
</dbReference>
<dbReference type="PDB" id="6NTM">
    <property type="method" value="X-ray"/>
    <property type="resolution" value="2.55 A"/>
    <property type="chains" value="A/B=33-574"/>
</dbReference>
<dbReference type="PDB" id="6NTN">
    <property type="method" value="X-ray"/>
    <property type="resolution" value="2.70 A"/>
    <property type="chains" value="A/B=33-574"/>
</dbReference>
<dbReference type="PDB" id="6NTO">
    <property type="method" value="X-ray"/>
    <property type="resolution" value="2.05 A"/>
    <property type="chains" value="A/B=33-574"/>
</dbReference>
<dbReference type="PDB" id="6O4W">
    <property type="method" value="X-ray"/>
    <property type="resolution" value="2.35 A"/>
    <property type="chains" value="A/B=32-578"/>
</dbReference>
<dbReference type="PDB" id="6O4X">
    <property type="method" value="X-ray"/>
    <property type="resolution" value="2.30 A"/>
    <property type="chains" value="A/B=32-578"/>
</dbReference>
<dbReference type="PDB" id="6O50">
    <property type="method" value="X-ray"/>
    <property type="resolution" value="2.35 A"/>
    <property type="chains" value="A/B=32-578"/>
</dbReference>
<dbReference type="PDB" id="6O52">
    <property type="method" value="X-ray"/>
    <property type="resolution" value="3.20 A"/>
    <property type="chains" value="A/B=32-578"/>
</dbReference>
<dbReference type="PDB" id="6O5R">
    <property type="method" value="X-ray"/>
    <property type="resolution" value="2.80 A"/>
    <property type="chains" value="A/B=32-578"/>
</dbReference>
<dbReference type="PDB" id="6O5S">
    <property type="method" value="X-ray"/>
    <property type="resolution" value="2.80 A"/>
    <property type="chains" value="A/B=32-578"/>
</dbReference>
<dbReference type="PDB" id="6O5V">
    <property type="method" value="X-ray"/>
    <property type="resolution" value="2.15 A"/>
    <property type="chains" value="A/B=32-578"/>
</dbReference>
<dbReference type="PDB" id="6O66">
    <property type="method" value="X-ray"/>
    <property type="resolution" value="2.45 A"/>
    <property type="chains" value="A/B=32-578"/>
</dbReference>
<dbReference type="PDB" id="6O69">
    <property type="method" value="X-ray"/>
    <property type="resolution" value="2.08 A"/>
    <property type="chains" value="A=33-574"/>
</dbReference>
<dbReference type="PDB" id="6U34">
    <property type="method" value="X-ray"/>
    <property type="resolution" value="2.40 A"/>
    <property type="chains" value="A/B=35-578"/>
</dbReference>
<dbReference type="PDB" id="6U37">
    <property type="method" value="X-ray"/>
    <property type="resolution" value="2.25 A"/>
    <property type="chains" value="A/B=32-578"/>
</dbReference>
<dbReference type="PDB" id="6U3P">
    <property type="method" value="X-ray"/>
    <property type="resolution" value="3.00 A"/>
    <property type="chains" value="A/B=32-578"/>
</dbReference>
<dbReference type="PDB" id="6WUV">
    <property type="method" value="X-ray"/>
    <property type="resolution" value="2.63 A"/>
    <property type="chains" value="A/B=33-574"/>
</dbReference>
<dbReference type="PDB" id="6WUY">
    <property type="method" value="X-ray"/>
    <property type="resolution" value="2.46 A"/>
    <property type="chains" value="A/B=33-574"/>
</dbReference>
<dbReference type="PDB" id="6WUZ">
    <property type="method" value="X-ray"/>
    <property type="resolution" value="2.25 A"/>
    <property type="chains" value="A/B=33-574"/>
</dbReference>
<dbReference type="PDB" id="6WV1">
    <property type="method" value="X-ray"/>
    <property type="resolution" value="2.37 A"/>
    <property type="chains" value="A/B=33-574"/>
</dbReference>
<dbReference type="PDB" id="6WVC">
    <property type="method" value="X-ray"/>
    <property type="resolution" value="2.60 A"/>
    <property type="chains" value="A/B=33-574"/>
</dbReference>
<dbReference type="PDB" id="6WVO">
    <property type="method" value="X-ray"/>
    <property type="resolution" value="2.19 A"/>
    <property type="chains" value="A/B=33-574"/>
</dbReference>
<dbReference type="PDB" id="6WVP">
    <property type="method" value="X-ray"/>
    <property type="resolution" value="2.31 A"/>
    <property type="chains" value="A/B=33-574"/>
</dbReference>
<dbReference type="PDB" id="6WVQ">
    <property type="method" value="X-ray"/>
    <property type="resolution" value="2.29 A"/>
    <property type="chains" value="A/B=33-574"/>
</dbReference>
<dbReference type="PDB" id="6ZWE">
    <property type="method" value="X-ray"/>
    <property type="resolution" value="3.00 A"/>
    <property type="chains" value="A/B=33-574"/>
</dbReference>
<dbReference type="PDB" id="7D9O">
    <property type="method" value="X-ray"/>
    <property type="resolution" value="2.45 A"/>
    <property type="chains" value="A/B=32-574"/>
</dbReference>
<dbReference type="PDB" id="7D9P">
    <property type="method" value="X-ray"/>
    <property type="resolution" value="2.85 A"/>
    <property type="chains" value="A/B=32-574"/>
</dbReference>
<dbReference type="PDB" id="7D9Q">
    <property type="method" value="X-ray"/>
    <property type="resolution" value="2.66 A"/>
    <property type="chains" value="A/B=32-574"/>
</dbReference>
<dbReference type="PDB" id="7E3D">
    <property type="method" value="X-ray"/>
    <property type="resolution" value="2.50 A"/>
    <property type="chains" value="A/B=35-574"/>
</dbReference>
<dbReference type="PDB" id="7E3H">
    <property type="method" value="X-ray"/>
    <property type="resolution" value="2.45 A"/>
    <property type="chains" value="A/B=35-574"/>
</dbReference>
<dbReference type="PDB" id="7RB5">
    <property type="method" value="X-ray"/>
    <property type="resolution" value="2.80 A"/>
    <property type="chains" value="A=32-578"/>
</dbReference>
<dbReference type="PDB" id="7RB6">
    <property type="method" value="X-ray"/>
    <property type="resolution" value="2.40 A"/>
    <property type="chains" value="A/B=32-578"/>
</dbReference>
<dbReference type="PDB" id="7RB7">
    <property type="method" value="X-ray"/>
    <property type="resolution" value="2.60 A"/>
    <property type="chains" value="A/B=32-578"/>
</dbReference>
<dbReference type="PDB" id="7XN1">
    <property type="method" value="X-ray"/>
    <property type="resolution" value="2.85 A"/>
    <property type="chains" value="A/B=35-574"/>
</dbReference>
<dbReference type="PDB" id="8AEN">
    <property type="method" value="X-ray"/>
    <property type="resolution" value="3.01 A"/>
    <property type="chains" value="A/B=32-574"/>
</dbReference>
<dbReference type="PDB" id="8AEV">
    <property type="method" value="X-ray"/>
    <property type="resolution" value="2.89 A"/>
    <property type="chains" value="A/B=32-574"/>
</dbReference>
<dbReference type="PDB" id="8DT2">
    <property type="method" value="X-ray"/>
    <property type="resolution" value="2.80 A"/>
    <property type="chains" value="A/B=32-578"/>
</dbReference>
<dbReference type="PDB" id="8DT4">
    <property type="method" value="X-ray"/>
    <property type="resolution" value="2.80 A"/>
    <property type="chains" value="A/B=32-578"/>
</dbReference>
<dbReference type="PDB" id="8DT5">
    <property type="method" value="X-ray"/>
    <property type="resolution" value="2.60 A"/>
    <property type="chains" value="A/B=32-578"/>
</dbReference>
<dbReference type="PDB" id="8DT7">
    <property type="method" value="X-ray"/>
    <property type="resolution" value="2.21 A"/>
    <property type="chains" value="A/B=32-578"/>
</dbReference>
<dbReference type="PDBsum" id="1B41"/>
<dbReference type="PDBsum" id="1F8U"/>
<dbReference type="PDBsum" id="1VZJ"/>
<dbReference type="PDBsum" id="2X8B"/>
<dbReference type="PDBsum" id="3LII"/>
<dbReference type="PDBsum" id="4BDT"/>
<dbReference type="PDBsum" id="4EY4"/>
<dbReference type="PDBsum" id="4EY5"/>
<dbReference type="PDBsum" id="4EY6"/>
<dbReference type="PDBsum" id="4EY7"/>
<dbReference type="PDBsum" id="4EY8"/>
<dbReference type="PDBsum" id="4M0E"/>
<dbReference type="PDBsum" id="4M0F"/>
<dbReference type="PDBsum" id="4PQE"/>
<dbReference type="PDBsum" id="5FOQ"/>
<dbReference type="PDBsum" id="5FPQ"/>
<dbReference type="PDBsum" id="5HF5"/>
<dbReference type="PDBsum" id="5HF6"/>
<dbReference type="PDBsum" id="5HF8"/>
<dbReference type="PDBsum" id="5HF9"/>
<dbReference type="PDBsum" id="5HFA"/>
<dbReference type="PDBsum" id="5HQ3"/>
<dbReference type="PDBsum" id="6CQT"/>
<dbReference type="PDBsum" id="6CQU"/>
<dbReference type="PDBsum" id="6CQV"/>
<dbReference type="PDBsum" id="6CQW"/>
<dbReference type="PDBsum" id="6CQX"/>
<dbReference type="PDBsum" id="6CQY"/>
<dbReference type="PDBsum" id="6CQZ"/>
<dbReference type="PDBsum" id="6F25"/>
<dbReference type="PDBsum" id="6NEA"/>
<dbReference type="PDBsum" id="6NTG"/>
<dbReference type="PDBsum" id="6NTH"/>
<dbReference type="PDBsum" id="6NTK"/>
<dbReference type="PDBsum" id="6NTL"/>
<dbReference type="PDBsum" id="6NTM"/>
<dbReference type="PDBsum" id="6NTN"/>
<dbReference type="PDBsum" id="6NTO"/>
<dbReference type="PDBsum" id="6O4W"/>
<dbReference type="PDBsum" id="6O4X"/>
<dbReference type="PDBsum" id="6O50"/>
<dbReference type="PDBsum" id="6O52"/>
<dbReference type="PDBsum" id="6O5R"/>
<dbReference type="PDBsum" id="6O5S"/>
<dbReference type="PDBsum" id="6O5V"/>
<dbReference type="PDBsum" id="6O66"/>
<dbReference type="PDBsum" id="6O69"/>
<dbReference type="PDBsum" id="6U34"/>
<dbReference type="PDBsum" id="6U37"/>
<dbReference type="PDBsum" id="6U3P"/>
<dbReference type="PDBsum" id="6WUV"/>
<dbReference type="PDBsum" id="6WUY"/>
<dbReference type="PDBsum" id="6WUZ"/>
<dbReference type="PDBsum" id="6WV1"/>
<dbReference type="PDBsum" id="6WVC"/>
<dbReference type="PDBsum" id="6WVO"/>
<dbReference type="PDBsum" id="6WVP"/>
<dbReference type="PDBsum" id="6WVQ"/>
<dbReference type="PDBsum" id="6ZWE"/>
<dbReference type="PDBsum" id="7D9O"/>
<dbReference type="PDBsum" id="7D9P"/>
<dbReference type="PDBsum" id="7D9Q"/>
<dbReference type="PDBsum" id="7E3D"/>
<dbReference type="PDBsum" id="7E3H"/>
<dbReference type="PDBsum" id="7RB5"/>
<dbReference type="PDBsum" id="7RB6"/>
<dbReference type="PDBsum" id="7RB7"/>
<dbReference type="PDBsum" id="7XN1"/>
<dbReference type="PDBsum" id="8AEN"/>
<dbReference type="PDBsum" id="8AEV"/>
<dbReference type="PDBsum" id="8DT2"/>
<dbReference type="PDBsum" id="8DT4"/>
<dbReference type="PDBsum" id="8DT5"/>
<dbReference type="PDBsum" id="8DT7"/>
<dbReference type="SASBDB" id="P22303"/>
<dbReference type="SMR" id="P22303"/>
<dbReference type="BioGRID" id="106561">
    <property type="interactions" value="4"/>
</dbReference>
<dbReference type="CORUM" id="P22303"/>
<dbReference type="DIP" id="DIP-1119N"/>
<dbReference type="ELM" id="P22303"/>
<dbReference type="FunCoup" id="P22303">
    <property type="interactions" value="257"/>
</dbReference>
<dbReference type="IntAct" id="P22303">
    <property type="interactions" value="8"/>
</dbReference>
<dbReference type="MINT" id="P22303"/>
<dbReference type="STRING" id="9606.ENSP00000303211"/>
<dbReference type="BindingDB" id="P22303"/>
<dbReference type="ChEMBL" id="CHEMBL220"/>
<dbReference type="DrugBank" id="DB07846">
    <property type="generic name" value="(3,4,8b-Trimethyl-3-oxido-2,3a-dihydro-1H-pyrrolo[2,3-b]indol-3-ium-7-yl) N-(2-ethylphenyl)carbamate"/>
</dbReference>
<dbReference type="DrugBank" id="DB02673">
    <property type="generic name" value="(4aS,6R,8aS)-11-[8-(1,3-Dioxo-1,3-dihydro-2H-isoindol-2-yl)octyl]-6-hydroxy-3-methoxy-5,6,9,10-tetrahydro-4aH-[1]benzofuro[3a,3,2-ef][2]benzazepin-11-ium"/>
</dbReference>
<dbReference type="DrugBank" id="DB04617">
    <property type="generic name" value="(9S)-9-[(8-AMMONIOOCTYL)AMINO]-1,2,3,4,9,10-HEXAHYDROACRIDINIUM"/>
</dbReference>
<dbReference type="DrugBank" id="DB04614">
    <property type="generic name" value="(R)-tacrine(10)-hupyridone"/>
</dbReference>
<dbReference type="DrugBank" id="DB04615">
    <property type="generic name" value="(S)-tacrine(10)-hupyridone"/>
</dbReference>
<dbReference type="DrugBank" id="DB07756">
    <property type="generic name" value="1-[3-({[(4-AMINO-5-FLUORO-2-METHYLQUINOLIN-3-YL)METHYL]THIO}METHYL)PHENYL]-2,2,2-TRIFLUOROETHANE-1,1-DIOL"/>
</dbReference>
<dbReference type="DrugBank" id="DB07701">
    <property type="generic name" value="1-BENZYL-4-[(5,6-DIMETHOXY-1-INDANON-2-YL)METHYL]PIPERIDINE"/>
</dbReference>
<dbReference type="DrugBank" id="DB02404">
    <property type="generic name" value="1-Deoxy-1-Thio-Heptaethylene Glycol"/>
</dbReference>
<dbReference type="DrugBank" id="DB03814">
    <property type="generic name" value="2-(N-morpholino)ethanesulfonic acid"/>
</dbReference>
<dbReference type="DrugBank" id="DB08615">
    <property type="generic name" value="2-[4-(DIMETHYLAMINO)PHENYL]-6-HYDROXY-3-METHYL-1,3-BENZOTHIAZOL-3-IUM"/>
</dbReference>
<dbReference type="DrugBank" id="DB02343">
    <property type="generic name" value="3,6,9,12,15-Pentaoxaheptadecane"/>
</dbReference>
<dbReference type="DrugBank" id="DB02226">
    <property type="generic name" value="3,8-Diamino-6-Phenyl-5-[6-[1-[2-[(1,2,3,4-Tetrahydro-9-Acridinyl)Amino]Ethyl]-1h-1,2,3-Triazol-4-Yl]Hexyl]-Phenanthridinium"/>
</dbReference>
<dbReference type="DrugBank" id="DB03005">
    <property type="generic name" value="3,8-Diamino-6-Phenyl-5-[6-[1-[2-[(1,2,3,4-Tetrahydro-9-Acridinyl)Amino]Ethyl]-1h-1,2,3-Triazol-5-Yl]Hexyl]-Phenanthridinium"/>
</dbReference>
<dbReference type="DrugBank" id="DB04114">
    <property type="generic name" value="3-Chloro-9-Ethyl-6,7,8,9,10,11-Hexahydro-7,11-Methanocycloocta[B]Quinolin-12-Amine"/>
</dbReference>
<dbReference type="DrugBank" id="DB03128">
    <property type="generic name" value="Acetylcholine"/>
</dbReference>
<dbReference type="DrugBank" id="DB01122">
    <property type="generic name" value="Ambenonium"/>
</dbReference>
<dbReference type="DrugBank" id="DB19353">
    <property type="generic name" value="Benzgalantamine"/>
</dbReference>
<dbReference type="DrugBank" id="DB03283">
    <property type="generic name" value="beta-L-fucose"/>
</dbReference>
<dbReference type="DrugBank" id="DB00411">
    <property type="generic name" value="Carbamoylcholine"/>
</dbReference>
<dbReference type="DrugBank" id="DB00122">
    <property type="generic name" value="Choline"/>
</dbReference>
<dbReference type="DrugBank" id="DB14006">
    <property type="generic name" value="Choline salicylate"/>
</dbReference>
<dbReference type="DrugBank" id="DB13511">
    <property type="generic name" value="Clebopride"/>
</dbReference>
<dbReference type="DrugBank" id="DB01245">
    <property type="generic name" value="Decamethonium"/>
</dbReference>
<dbReference type="DrugBank" id="DB00944">
    <property type="generic name" value="Demecarium"/>
</dbReference>
<dbReference type="DrugBank" id="DB08357">
    <property type="generic name" value="Diethylene glycol diethyl ether"/>
</dbReference>
<dbReference type="DrugBank" id="DB08996">
    <property type="generic name" value="Dimetacrine"/>
</dbReference>
<dbReference type="DrugBank" id="DB00449">
    <property type="generic name" value="Dipivefrin"/>
</dbReference>
<dbReference type="DrugBank" id="DB00843">
    <property type="generic name" value="Donepezil"/>
</dbReference>
<dbReference type="DrugBank" id="DB01057">
    <property type="generic name" value="Echothiophate"/>
</dbReference>
<dbReference type="DrugBank" id="DB01010">
    <property type="generic name" value="Edrophonium"/>
</dbReference>
<dbReference type="DrugBank" id="DB01364">
    <property type="generic name" value="Ephedrine"/>
</dbReference>
<dbReference type="DrugBank" id="DB00898">
    <property type="generic name" value="Ethanol"/>
</dbReference>
<dbReference type="DrugBank" id="DB00674">
    <property type="generic name" value="Galantamine"/>
</dbReference>
<dbReference type="DrugBank" id="DB00483">
    <property type="generic name" value="Gallamine triethiodide"/>
</dbReference>
<dbReference type="DrugBank" id="DB06525">
    <property type="generic name" value="Ganstigmine"/>
</dbReference>
<dbReference type="DrugBank" id="DB04864">
    <property type="generic name" value="Huperzine A"/>
</dbReference>
<dbReference type="DrugBank" id="DB03348">
    <property type="generic name" value="Huperzine B"/>
</dbReference>
<dbReference type="DrugBank" id="DB07555">
    <property type="generic name" value="Hydroxy(oxo)(2-{(1S)-2,2,2-trifluoro-1-[2-(trimethylarsonio)ethoxy]ethyl}phenyl)ammonium"/>
</dbReference>
<dbReference type="DrugBank" id="DB11521">
    <property type="generic name" value="Imidocarb"/>
</dbReference>
<dbReference type="DrugBank" id="DB00677">
    <property type="generic name" value="Isoflurophate"/>
</dbReference>
<dbReference type="DrugBank" id="DB04924">
    <property type="generic name" value="Itopride"/>
</dbReference>
<dbReference type="DrugBank" id="DB16213">
    <property type="generic name" value="Ladostigil"/>
</dbReference>
<dbReference type="DrugBank" id="DB03359">
    <property type="generic name" value="M-(N,N,N-Trimethylammonio)-2,2,2-Trifluoro-1,1-Dihydroxyethylbenzene"/>
</dbReference>
<dbReference type="DrugBank" id="DB00772">
    <property type="generic name" value="Malathion"/>
</dbReference>
<dbReference type="DrugBank" id="DB00358">
    <property type="generic name" value="Mefloquine"/>
</dbReference>
<dbReference type="DrugBank" id="DB13058">
    <property type="generic name" value="Methanesulfonyl Fluoride"/>
</dbReference>
<dbReference type="DrugBank" id="DB00940">
    <property type="generic name" value="Methantheline"/>
</dbReference>
<dbReference type="DrugBank" id="DB02825">
    <property type="generic name" value="Methylphosphinate"/>
</dbReference>
<dbReference type="DrugBank" id="DB02845">
    <property type="generic name" value="Methylphosphinic Acid"/>
</dbReference>
<dbReference type="DrugBank" id="DB08167">
    <property type="generic name" value="Methylthioninium"/>
</dbReference>
<dbReference type="DrugBank" id="DB04021">
    <property type="generic name" value="MF268"/>
</dbReference>
<dbReference type="DrugBank" id="DB00805">
    <property type="generic name" value="Minaprine"/>
</dbReference>
<dbReference type="DrugBank" id="DB01805">
    <property type="generic name" value="Monoisopropylphosphorylserine"/>
</dbReference>
<dbReference type="DrugBank" id="DB03740">
    <property type="generic name" value="N-acetyl-alpha-D-glucosamine"/>
</dbReference>
<dbReference type="DrugBank" id="DB04556">
    <property type="generic name" value="NAP-226-90"/>
</dbReference>
<dbReference type="DrugBank" id="DB01400">
    <property type="generic name" value="Neostigmine"/>
</dbReference>
<dbReference type="DrugBank" id="DB13750">
    <property type="generic name" value="Obidoxime"/>
</dbReference>
<dbReference type="DrugBank" id="DB13495">
    <property type="generic name" value="Paraoxon"/>
</dbReference>
<dbReference type="DrugBank" id="DB04892">
    <property type="generic name" value="Phenserine"/>
</dbReference>
<dbReference type="DrugBank" id="DB00981">
    <property type="generic name" value="Physostigmine"/>
</dbReference>
<dbReference type="DrugBank" id="DB00733">
    <property type="generic name" value="Pralidoxime"/>
</dbReference>
<dbReference type="DrugBank" id="DB02166">
    <property type="generic name" value="Propidium"/>
</dbReference>
<dbReference type="DrugBank" id="DB00545">
    <property type="generic name" value="Pyridostigmine"/>
</dbReference>
<dbReference type="DrugBank" id="DB00863">
    <property type="generic name" value="Ranitidine"/>
</dbReference>
<dbReference type="DrugBank" id="DB00989">
    <property type="generic name" value="Rivastigmine"/>
</dbReference>
<dbReference type="DrugBank" id="DB00382">
    <property type="generic name" value="Tacrine"/>
</dbReference>
<dbReference type="DrugBank" id="DB04616">
    <property type="generic name" value="TACRINE(8)-4-AMINOQUINOLINE"/>
</dbReference>
<dbReference type="DrugBank" id="DB12816">
    <property type="generic name" value="Terpinen-4-ol"/>
</dbReference>
<dbReference type="DrugBank" id="DB01199">
    <property type="generic name" value="Tubocurarine"/>
</dbReference>
<dbReference type="DrugBank" id="DB13503">
    <property type="generic name" value="Tyrothricin"/>
</dbReference>
<dbReference type="DrugBank" id="DB04859">
    <property type="generic name" value="Zanapezil"/>
</dbReference>
<dbReference type="DrugCentral" id="P22303"/>
<dbReference type="GuidetoPHARMACOLOGY" id="2465"/>
<dbReference type="ESTHER" id="human-ACHE">
    <property type="family name" value="ACHE"/>
</dbReference>
<dbReference type="MEROPS" id="S09.979"/>
<dbReference type="GlyCosmos" id="P22303">
    <property type="glycosylation" value="3 sites, No reported glycans"/>
</dbReference>
<dbReference type="GlyGen" id="P22303">
    <property type="glycosylation" value="5 sites, 2 N-linked glycans (2 sites)"/>
</dbReference>
<dbReference type="iPTMnet" id="P22303"/>
<dbReference type="PhosphoSitePlus" id="P22303"/>
<dbReference type="BioMuta" id="ACHE"/>
<dbReference type="DMDM" id="113037"/>
<dbReference type="jPOST" id="P22303"/>
<dbReference type="MassIVE" id="P22303"/>
<dbReference type="PaxDb" id="9606-ENSP00000303211"/>
<dbReference type="PeptideAtlas" id="P22303"/>
<dbReference type="ProteomicsDB" id="53971">
    <molecule id="P22303-1"/>
</dbReference>
<dbReference type="ProteomicsDB" id="53972">
    <molecule id="P22303-2"/>
</dbReference>
<dbReference type="ProteomicsDB" id="53973">
    <molecule id="P22303-3"/>
</dbReference>
<dbReference type="ProteomicsDB" id="53974">
    <molecule id="P22303-4"/>
</dbReference>
<dbReference type="Antibodypedia" id="16701">
    <property type="antibodies" value="777 antibodies from 43 providers"/>
</dbReference>
<dbReference type="DNASU" id="43"/>
<dbReference type="Ensembl" id="ENST00000241069.11">
    <molecule id="P22303-1"/>
    <property type="protein sequence ID" value="ENSP00000241069.5"/>
    <property type="gene ID" value="ENSG00000087085.16"/>
</dbReference>
<dbReference type="Ensembl" id="ENST00000302913.8">
    <molecule id="P22303-2"/>
    <property type="protein sequence ID" value="ENSP00000303211.4"/>
    <property type="gene ID" value="ENSG00000087085.16"/>
</dbReference>
<dbReference type="Ensembl" id="ENST00000411582.4">
    <molecule id="P22303-2"/>
    <property type="protein sequence ID" value="ENSP00000404865.1"/>
    <property type="gene ID" value="ENSG00000087085.16"/>
</dbReference>
<dbReference type="Ensembl" id="ENST00000412389.5">
    <molecule id="P22303-1"/>
    <property type="protein sequence ID" value="ENSP00000394976.1"/>
    <property type="gene ID" value="ENSG00000087085.16"/>
</dbReference>
<dbReference type="Ensembl" id="ENST00000419336.6">
    <molecule id="P22303-3"/>
    <property type="protein sequence ID" value="ENSP00000403474.2"/>
    <property type="gene ID" value="ENSG00000087085.16"/>
</dbReference>
<dbReference type="Ensembl" id="ENST00000428317.7">
    <molecule id="P22303-1"/>
    <property type="protein sequence ID" value="ENSP00000414858.1"/>
    <property type="gene ID" value="ENSG00000087085.16"/>
</dbReference>
<dbReference type="GeneID" id="43"/>
<dbReference type="KEGG" id="hsa:43"/>
<dbReference type="MANE-Select" id="ENST00000241069.11">
    <property type="protein sequence ID" value="ENSP00000241069.5"/>
    <property type="RefSeq nucleotide sequence ID" value="NM_000665.5"/>
    <property type="RefSeq protein sequence ID" value="NP_000656.1"/>
</dbReference>
<dbReference type="UCSC" id="uc003uxd.4">
    <molecule id="P22303-1"/>
    <property type="organism name" value="human"/>
</dbReference>
<dbReference type="AGR" id="HGNC:108"/>
<dbReference type="CTD" id="43"/>
<dbReference type="DisGeNET" id="43"/>
<dbReference type="GeneCards" id="ACHE"/>
<dbReference type="HGNC" id="HGNC:108">
    <property type="gene designation" value="ACHE"/>
</dbReference>
<dbReference type="HPA" id="ENSG00000087085">
    <property type="expression patterns" value="Group enriched (brain, skeletal muscle, tongue)"/>
</dbReference>
<dbReference type="MalaCards" id="ACHE"/>
<dbReference type="MIM" id="100740">
    <property type="type" value="gene+phenotype"/>
</dbReference>
<dbReference type="MIM" id="112100">
    <property type="type" value="phenotype"/>
</dbReference>
<dbReference type="neXtProt" id="NX_P22303"/>
<dbReference type="OpenTargets" id="ENSG00000087085"/>
<dbReference type="PharmGKB" id="PA20"/>
<dbReference type="VEuPathDB" id="HostDB:ENSG00000087085"/>
<dbReference type="eggNOG" id="KOG4389">
    <property type="taxonomic scope" value="Eukaryota"/>
</dbReference>
<dbReference type="GeneTree" id="ENSGT00940000157637"/>
<dbReference type="HOGENOM" id="CLU_006586_13_0_1"/>
<dbReference type="InParanoid" id="P22303"/>
<dbReference type="OMA" id="CDHLVAP"/>
<dbReference type="OrthoDB" id="9000293at2759"/>
<dbReference type="PAN-GO" id="P22303">
    <property type="GO annotations" value="2 GO annotations based on evolutionary models"/>
</dbReference>
<dbReference type="PhylomeDB" id="P22303"/>
<dbReference type="TreeFam" id="TF315470"/>
<dbReference type="BRENDA" id="3.1.1.7">
    <property type="organism ID" value="2681"/>
</dbReference>
<dbReference type="BRENDA" id="3.5.1.13">
    <property type="organism ID" value="2681"/>
</dbReference>
<dbReference type="PathwayCommons" id="P22303"/>
<dbReference type="Reactome" id="R-HSA-112311">
    <property type="pathway name" value="Neurotransmitter clearance"/>
</dbReference>
<dbReference type="Reactome" id="R-HSA-1483191">
    <property type="pathway name" value="Synthesis of PC"/>
</dbReference>
<dbReference type="Reactome" id="R-HSA-422085">
    <property type="pathway name" value="Synthesis, secretion, and deacylation of Ghrelin"/>
</dbReference>
<dbReference type="SABIO-RK" id="P22303"/>
<dbReference type="SignaLink" id="P22303"/>
<dbReference type="SIGNOR" id="P22303"/>
<dbReference type="BioGRID-ORCS" id="43">
    <property type="hits" value="118 hits in 1172 CRISPR screens"/>
</dbReference>
<dbReference type="ChiTaRS" id="ACHE">
    <property type="organism name" value="human"/>
</dbReference>
<dbReference type="EvolutionaryTrace" id="P22303"/>
<dbReference type="GeneWiki" id="Acetylcholinesterase"/>
<dbReference type="GenomeRNAi" id="43"/>
<dbReference type="Pharos" id="P22303">
    <property type="development level" value="Tclin"/>
</dbReference>
<dbReference type="PRO" id="PR:P22303"/>
<dbReference type="Proteomes" id="UP000005640">
    <property type="component" value="Chromosome 7"/>
</dbReference>
<dbReference type="RNAct" id="P22303">
    <property type="molecule type" value="protein"/>
</dbReference>
<dbReference type="Bgee" id="ENSG00000087085">
    <property type="expression patterns" value="Expressed in hindlimb stylopod muscle and 130 other cell types or tissues"/>
</dbReference>
<dbReference type="ExpressionAtlas" id="P22303">
    <property type="expression patterns" value="baseline and differential"/>
</dbReference>
<dbReference type="GO" id="GO:0005604">
    <property type="term" value="C:basement membrane"/>
    <property type="evidence" value="ECO:0000303"/>
    <property type="project" value="HGNC-UCL"/>
</dbReference>
<dbReference type="GO" id="GO:0009986">
    <property type="term" value="C:cell surface"/>
    <property type="evidence" value="ECO:0007669"/>
    <property type="project" value="Ensembl"/>
</dbReference>
<dbReference type="GO" id="GO:0005576">
    <property type="term" value="C:extracellular region"/>
    <property type="evidence" value="ECO:0000314"/>
    <property type="project" value="HGNC-UCL"/>
</dbReference>
<dbReference type="GO" id="GO:0005615">
    <property type="term" value="C:extracellular space"/>
    <property type="evidence" value="ECO:0007669"/>
    <property type="project" value="Ensembl"/>
</dbReference>
<dbReference type="GO" id="GO:0005794">
    <property type="term" value="C:Golgi apparatus"/>
    <property type="evidence" value="ECO:0000314"/>
    <property type="project" value="HGNC-UCL"/>
</dbReference>
<dbReference type="GO" id="GO:0016020">
    <property type="term" value="C:membrane"/>
    <property type="evidence" value="ECO:0000314"/>
    <property type="project" value="HGNC-UCL"/>
</dbReference>
<dbReference type="GO" id="GO:0031594">
    <property type="term" value="C:neuromuscular junction"/>
    <property type="evidence" value="ECO:0007669"/>
    <property type="project" value="Ensembl"/>
</dbReference>
<dbReference type="GO" id="GO:0005634">
    <property type="term" value="C:nucleus"/>
    <property type="evidence" value="ECO:0007669"/>
    <property type="project" value="UniProtKB-SubCell"/>
</dbReference>
<dbReference type="GO" id="GO:0048471">
    <property type="term" value="C:perinuclear region of cytoplasm"/>
    <property type="evidence" value="ECO:0000314"/>
    <property type="project" value="HGNC-UCL"/>
</dbReference>
<dbReference type="GO" id="GO:0005886">
    <property type="term" value="C:plasma membrane"/>
    <property type="evidence" value="ECO:0000304"/>
    <property type="project" value="Reactome"/>
</dbReference>
<dbReference type="GO" id="GO:0098552">
    <property type="term" value="C:side of membrane"/>
    <property type="evidence" value="ECO:0007669"/>
    <property type="project" value="UniProtKB-KW"/>
</dbReference>
<dbReference type="GO" id="GO:0045202">
    <property type="term" value="C:synapse"/>
    <property type="evidence" value="ECO:0000314"/>
    <property type="project" value="HGNC-UCL"/>
</dbReference>
<dbReference type="GO" id="GO:0043083">
    <property type="term" value="C:synaptic cleft"/>
    <property type="evidence" value="ECO:0007669"/>
    <property type="project" value="GOC"/>
</dbReference>
<dbReference type="GO" id="GO:0042166">
    <property type="term" value="F:acetylcholine binding"/>
    <property type="evidence" value="ECO:0000314"/>
    <property type="project" value="HGNC-UCL"/>
</dbReference>
<dbReference type="GO" id="GO:0003990">
    <property type="term" value="F:acetylcholinesterase activity"/>
    <property type="evidence" value="ECO:0000314"/>
    <property type="project" value="HGNC-UCL"/>
</dbReference>
<dbReference type="GO" id="GO:0001540">
    <property type="term" value="F:amyloid-beta binding"/>
    <property type="evidence" value="ECO:0000304"/>
    <property type="project" value="UniProtKB"/>
</dbReference>
<dbReference type="GO" id="GO:0004104">
    <property type="term" value="F:cholinesterase activity"/>
    <property type="evidence" value="ECO:0000314"/>
    <property type="project" value="HGNC-UCL"/>
</dbReference>
<dbReference type="GO" id="GO:0005518">
    <property type="term" value="F:collagen binding"/>
    <property type="evidence" value="ECO:0000314"/>
    <property type="project" value="HGNC-UCL"/>
</dbReference>
<dbReference type="GO" id="GO:0016787">
    <property type="term" value="F:hydrolase activity"/>
    <property type="evidence" value="ECO:0000314"/>
    <property type="project" value="HGNC-UCL"/>
</dbReference>
<dbReference type="GO" id="GO:0043236">
    <property type="term" value="F:laminin binding"/>
    <property type="evidence" value="ECO:0000314"/>
    <property type="project" value="BHF-UCL"/>
</dbReference>
<dbReference type="GO" id="GO:0042803">
    <property type="term" value="F:protein homodimerization activity"/>
    <property type="evidence" value="ECO:0000353"/>
    <property type="project" value="HGNC-UCL"/>
</dbReference>
<dbReference type="GO" id="GO:0017171">
    <property type="term" value="F:serine hydrolase activity"/>
    <property type="evidence" value="ECO:0000314"/>
    <property type="project" value="HGNC-UCL"/>
</dbReference>
<dbReference type="GO" id="GO:0006581">
    <property type="term" value="P:acetylcholine catabolic process"/>
    <property type="evidence" value="ECO:0000314"/>
    <property type="project" value="HGNC-UCL"/>
</dbReference>
<dbReference type="GO" id="GO:0001507">
    <property type="term" value="P:acetylcholine catabolic process in synaptic cleft"/>
    <property type="evidence" value="ECO:0000303"/>
    <property type="project" value="UniProtKB"/>
</dbReference>
<dbReference type="GO" id="GO:0095500">
    <property type="term" value="P:acetylcholine receptor signaling pathway"/>
    <property type="evidence" value="ECO:0007669"/>
    <property type="project" value="Ensembl"/>
</dbReference>
<dbReference type="GO" id="GO:0042982">
    <property type="term" value="P:amyloid precursor protein metabolic process"/>
    <property type="evidence" value="ECO:0000304"/>
    <property type="project" value="UniProtKB"/>
</dbReference>
<dbReference type="GO" id="GO:0007155">
    <property type="term" value="P:cell adhesion"/>
    <property type="evidence" value="ECO:0000314"/>
    <property type="project" value="HGNC-UCL"/>
</dbReference>
<dbReference type="GO" id="GO:0032223">
    <property type="term" value="P:negative regulation of synaptic transmission, cholinergic"/>
    <property type="evidence" value="ECO:0000305"/>
    <property type="project" value="HGNC-UCL"/>
</dbReference>
<dbReference type="GO" id="GO:0007399">
    <property type="term" value="P:nervous system development"/>
    <property type="evidence" value="ECO:0000304"/>
    <property type="project" value="UniProtKB"/>
</dbReference>
<dbReference type="GO" id="GO:0002076">
    <property type="term" value="P:osteoblast development"/>
    <property type="evidence" value="ECO:0000270"/>
    <property type="project" value="HGNC-UCL"/>
</dbReference>
<dbReference type="GO" id="GO:0120162">
    <property type="term" value="P:positive regulation of cold-induced thermogenesis"/>
    <property type="evidence" value="ECO:0000250"/>
    <property type="project" value="YuBioLab"/>
</dbReference>
<dbReference type="GO" id="GO:0050714">
    <property type="term" value="P:positive regulation of protein secretion"/>
    <property type="evidence" value="ECO:0000304"/>
    <property type="project" value="UniProtKB"/>
</dbReference>
<dbReference type="GO" id="GO:0031623">
    <property type="term" value="P:receptor internalization"/>
    <property type="evidence" value="ECO:0007669"/>
    <property type="project" value="Ensembl"/>
</dbReference>
<dbReference type="GO" id="GO:0001919">
    <property type="term" value="P:regulation of receptor recycling"/>
    <property type="evidence" value="ECO:0007669"/>
    <property type="project" value="Ensembl"/>
</dbReference>
<dbReference type="GO" id="GO:0060041">
    <property type="term" value="P:retina development in camera-type eye"/>
    <property type="evidence" value="ECO:0007669"/>
    <property type="project" value="Ensembl"/>
</dbReference>
<dbReference type="GO" id="GO:0007416">
    <property type="term" value="P:synapse assembly"/>
    <property type="evidence" value="ECO:0000304"/>
    <property type="project" value="UniProtKB"/>
</dbReference>
<dbReference type="CDD" id="cd00312">
    <property type="entry name" value="Esterase_lipase"/>
    <property type="match status" value="1"/>
</dbReference>
<dbReference type="FunFam" id="3.40.50.1820:FF:000029">
    <property type="entry name" value="Acetylcholinesterase"/>
    <property type="match status" value="1"/>
</dbReference>
<dbReference type="Gene3D" id="3.40.50.1820">
    <property type="entry name" value="alpha/beta hydrolase"/>
    <property type="match status" value="1"/>
</dbReference>
<dbReference type="InterPro" id="IPR029058">
    <property type="entry name" value="AB_hydrolase_fold"/>
</dbReference>
<dbReference type="InterPro" id="IPR050654">
    <property type="entry name" value="AChE-related_enzymes"/>
</dbReference>
<dbReference type="InterPro" id="IPR014788">
    <property type="entry name" value="AChE_tetra"/>
</dbReference>
<dbReference type="InterPro" id="IPR002018">
    <property type="entry name" value="CarbesteraseB"/>
</dbReference>
<dbReference type="InterPro" id="IPR019826">
    <property type="entry name" value="Carboxylesterase_B_AS"/>
</dbReference>
<dbReference type="InterPro" id="IPR019819">
    <property type="entry name" value="Carboxylesterase_B_CS"/>
</dbReference>
<dbReference type="InterPro" id="IPR000997">
    <property type="entry name" value="Cholinesterase"/>
</dbReference>
<dbReference type="PANTHER" id="PTHR43918">
    <property type="entry name" value="ACETYLCHOLINESTERASE"/>
    <property type="match status" value="1"/>
</dbReference>
<dbReference type="PANTHER" id="PTHR43918:SF11">
    <property type="entry name" value="ACETYLCHOLINESTERASE"/>
    <property type="match status" value="1"/>
</dbReference>
<dbReference type="Pfam" id="PF08674">
    <property type="entry name" value="AChE_tetra"/>
    <property type="match status" value="1"/>
</dbReference>
<dbReference type="Pfam" id="PF00135">
    <property type="entry name" value="COesterase"/>
    <property type="match status" value="1"/>
</dbReference>
<dbReference type="PRINTS" id="PR00878">
    <property type="entry name" value="CHOLNESTRASE"/>
</dbReference>
<dbReference type="SUPFAM" id="SSF53474">
    <property type="entry name" value="alpha/beta-Hydrolases"/>
    <property type="match status" value="1"/>
</dbReference>
<dbReference type="PROSITE" id="PS00122">
    <property type="entry name" value="CARBOXYLESTERASE_B_1"/>
    <property type="match status" value="1"/>
</dbReference>
<dbReference type="PROSITE" id="PS00941">
    <property type="entry name" value="CARBOXYLESTERASE_B_2"/>
    <property type="match status" value="1"/>
</dbReference>
<feature type="signal peptide" evidence="2">
    <location>
        <begin position="1"/>
        <end position="31"/>
    </location>
</feature>
<feature type="chain" id="PRO_0000008587" description="Acetylcholinesterase">
    <location>
        <begin position="32"/>
        <end position="614"/>
    </location>
</feature>
<feature type="active site" description="Acyl-ester intermediate">
    <location>
        <position position="234"/>
    </location>
</feature>
<feature type="active site" description="Charge relay system">
    <location>
        <position position="365"/>
    </location>
</feature>
<feature type="active site" description="Charge relay system">
    <location>
        <position position="478"/>
    </location>
</feature>
<feature type="binding site" evidence="28">
    <location>
        <position position="117"/>
    </location>
    <ligand>
        <name>galanthamine</name>
        <dbReference type="ChEBI" id="CHEBI:178021"/>
    </ligand>
</feature>
<feature type="binding site" evidence="27">
    <location>
        <position position="117"/>
    </location>
    <ligand>
        <name>huperzine A</name>
        <dbReference type="ChEBI" id="CHEBI:178022"/>
    </ligand>
</feature>
<feature type="binding site" evidence="25">
    <location>
        <position position="153"/>
    </location>
    <ligand>
        <name>huprine W</name>
        <dbReference type="ChEBI" id="CHEBI:188158"/>
    </ligand>
</feature>
<feature type="binding site" evidence="27">
    <location>
        <position position="164"/>
    </location>
    <ligand>
        <name>huperzine A</name>
        <dbReference type="ChEBI" id="CHEBI:178022"/>
    </ligand>
</feature>
<feature type="binding site" evidence="28">
    <location>
        <begin position="233"/>
        <end position="234"/>
    </location>
    <ligand>
        <name>galanthamine</name>
        <dbReference type="ChEBI" id="CHEBI:178021"/>
    </ligand>
</feature>
<feature type="binding site" evidence="25">
    <location>
        <position position="234"/>
    </location>
    <ligand>
        <name>huprine W</name>
        <dbReference type="ChEBI" id="CHEBI:188158"/>
    </ligand>
</feature>
<feature type="binding site" evidence="28">
    <location>
        <position position="368"/>
    </location>
    <ligand>
        <name>galanthamine</name>
        <dbReference type="ChEBI" id="CHEBI:178021"/>
    </ligand>
</feature>
<feature type="binding site" evidence="27">
    <location>
        <position position="368"/>
    </location>
    <ligand>
        <name>huperzine A</name>
        <dbReference type="ChEBI" id="CHEBI:178022"/>
    </ligand>
</feature>
<feature type="binding site" evidence="25">
    <location>
        <position position="470"/>
    </location>
    <ligand>
        <name>huprine W</name>
        <dbReference type="ChEBI" id="CHEBI:188158"/>
    </ligand>
</feature>
<feature type="binding site" evidence="25">
    <location>
        <position position="478"/>
    </location>
    <ligand>
        <name>huprine W</name>
        <dbReference type="ChEBI" id="CHEBI:188158"/>
    </ligand>
</feature>
<feature type="glycosylation site" description="N-linked (GlcNAc...) asparagine" evidence="10 26 27 28 29">
    <location>
        <position position="296"/>
    </location>
</feature>
<feature type="glycosylation site" description="N-linked (GlcNAc...) asparagine" evidence="3 9 10 11 21 22 24 25 26 27 28 29 30">
    <location>
        <position position="381"/>
    </location>
</feature>
<feature type="glycosylation site" description="N-linked (GlcNAc...) asparagine" evidence="10 30">
    <location>
        <position position="495"/>
    </location>
</feature>
<feature type="disulfide bond">
    <location>
        <begin position="100"/>
        <end position="127"/>
    </location>
</feature>
<feature type="disulfide bond">
    <location>
        <begin position="288"/>
        <end position="303"/>
    </location>
</feature>
<feature type="disulfide bond">
    <location>
        <begin position="440"/>
        <end position="560"/>
    </location>
</feature>
<feature type="disulfide bond" description="Interchain">
    <location>
        <position position="611"/>
    </location>
</feature>
<feature type="splice variant" id="VSP_035568" description="In isoform 4." evidence="17">
    <location>
        <begin position="357"/>
        <end position="444"/>
    </location>
</feature>
<feature type="splice variant" id="VSP_001457" description="In isoform H." evidence="15 16">
    <original>DTLDEAERQWKAEFHRWSSYMVHWKNQFDHYSKQDRCSDL</original>
    <variation>ASEAPSTCPGFTHGEAAPRPGLPLPLLLLHQLLLLFLSHLRRL</variation>
    <location>
        <begin position="575"/>
        <end position="614"/>
    </location>
</feature>
<feature type="splice variant" id="VSP_035569" description="In isoform R." evidence="16">
    <original>DTLDEAERQWKAEFHRWSSYMVHWKNQFD</original>
    <variation>GMQGPAGSAGRRGVGARQCNPSLLPLASE</variation>
    <location>
        <begin position="575"/>
        <end position="603"/>
    </location>
</feature>
<feature type="splice variant" id="VSP_035570" description="In isoform R." evidence="16">
    <location>
        <begin position="604"/>
        <end position="614"/>
    </location>
</feature>
<feature type="sequence variant" id="VAR_021325" description="In dbSNP:rs17881553." evidence="14">
    <original>R</original>
    <variation>Q</variation>
    <location>
        <position position="34"/>
    </location>
</feature>
<feature type="sequence variant" id="VAR_021326" description="In dbSNP:rs17885778." evidence="14">
    <original>P</original>
    <variation>A</variation>
    <location>
        <position position="135"/>
    </location>
</feature>
<feature type="sequence variant" id="VAR_011934" description="In dbSNP:rs8286.">
    <original>V</original>
    <variation>E</variation>
    <location>
        <position position="333"/>
    </location>
</feature>
<feature type="sequence variant" id="VAR_002359" description="In Yt(b) antigen; dbSNP:rs1799805." evidence="13 14">
    <original>H</original>
    <variation>N</variation>
    <location>
        <position position="353"/>
    </location>
</feature>
<feature type="mutagenesis site" description="Misfolding, absence of secretion." evidence="5">
    <original>D</original>
    <variation>N</variation>
    <location>
        <position position="206"/>
    </location>
</feature>
<feature type="mutagenesis site" description="Loss of activity." evidence="5">
    <original>S</original>
    <variation>A</variation>
    <location>
        <position position="234"/>
    </location>
</feature>
<feature type="mutagenesis site" description="Loss of activity." evidence="5">
    <original>E</original>
    <variation>A</variation>
    <location>
        <position position="365"/>
    </location>
</feature>
<feature type="mutagenesis site" description="Misfolding, absence of secretion." evidence="5">
    <original>D</original>
    <variation>N</variation>
    <location>
        <position position="435"/>
    </location>
</feature>
<feature type="mutagenesis site" description="Loss of activity." evidence="5">
    <original>H</original>
    <variation>A</variation>
    <location>
        <position position="478"/>
    </location>
</feature>
<feature type="mutagenesis site" description="Impairment of interchain disulfide bridge formation." evidence="8">
    <original>C</original>
    <variation>A</variation>
    <location>
        <position position="611"/>
    </location>
</feature>
<feature type="sequence conflict" description="In Ref. 5; BAD97163." evidence="18" ref="5">
    <original>A</original>
    <variation>T</variation>
    <location>
        <position position="279"/>
    </location>
</feature>
<feature type="sequence conflict" description="In Ref. 5; BAD97163." evidence="18" ref="5">
    <original>D</original>
    <variation>G</variation>
    <location>
        <position position="415"/>
    </location>
</feature>
<feature type="sequence conflict" description="In Ref. 9; AAI43470." evidence="18" ref="9">
    <original>F</original>
    <variation>L</variation>
    <location>
        <position position="486"/>
    </location>
</feature>
<feature type="helix" evidence="33">
    <location>
        <begin position="37"/>
        <end position="39"/>
    </location>
</feature>
<feature type="strand" evidence="33">
    <location>
        <begin position="40"/>
        <end position="43"/>
    </location>
</feature>
<feature type="strand" evidence="33">
    <location>
        <begin position="46"/>
        <end position="49"/>
    </location>
</feature>
<feature type="strand" evidence="33">
    <location>
        <begin position="51"/>
        <end position="53"/>
    </location>
</feature>
<feature type="strand" evidence="33">
    <location>
        <begin position="60"/>
        <end position="67"/>
    </location>
</feature>
<feature type="helix" evidence="33">
    <location>
        <begin position="74"/>
        <end position="76"/>
    </location>
</feature>
<feature type="strand" evidence="33">
    <location>
        <begin position="88"/>
        <end position="92"/>
    </location>
</feature>
<feature type="strand" evidence="33">
    <location>
        <begin position="99"/>
        <end position="101"/>
    </location>
</feature>
<feature type="helix" evidence="33">
    <location>
        <begin position="112"/>
        <end position="115"/>
    </location>
</feature>
<feature type="strand" evidence="33">
    <location>
        <begin position="123"/>
        <end position="125"/>
    </location>
</feature>
<feature type="strand" evidence="33">
    <location>
        <begin position="129"/>
        <end position="137"/>
    </location>
</feature>
<feature type="strand" evidence="33">
    <location>
        <begin position="143"/>
        <end position="149"/>
    </location>
</feature>
<feature type="turn" evidence="33">
    <location>
        <begin position="153"/>
        <end position="155"/>
    </location>
</feature>
<feature type="helix" evidence="33">
    <location>
        <begin position="162"/>
        <end position="164"/>
    </location>
</feature>
<feature type="helix" evidence="33">
    <location>
        <begin position="167"/>
        <end position="173"/>
    </location>
</feature>
<feature type="strand" evidence="33">
    <location>
        <begin position="176"/>
        <end position="180"/>
    </location>
</feature>
<feature type="helix" evidence="33">
    <location>
        <begin position="185"/>
        <end position="189"/>
    </location>
</feature>
<feature type="strand" evidence="32">
    <location>
        <begin position="196"/>
        <end position="198"/>
    </location>
</feature>
<feature type="helix" evidence="33">
    <location>
        <begin position="202"/>
        <end position="217"/>
    </location>
</feature>
<feature type="helix" evidence="33">
    <location>
        <begin position="218"/>
        <end position="221"/>
    </location>
</feature>
<feature type="strand" evidence="33">
    <location>
        <begin position="223"/>
        <end position="233"/>
    </location>
</feature>
<feature type="helix" evidence="33">
    <location>
        <begin position="235"/>
        <end position="244"/>
    </location>
</feature>
<feature type="helix" evidence="33">
    <location>
        <begin position="247"/>
        <end position="250"/>
    </location>
</feature>
<feature type="strand" evidence="33">
    <location>
        <begin position="254"/>
        <end position="260"/>
    </location>
</feature>
<feature type="turn" evidence="33">
    <location>
        <begin position="266"/>
        <end position="268"/>
    </location>
</feature>
<feature type="helix" evidence="33">
    <location>
        <begin position="272"/>
        <end position="285"/>
    </location>
</feature>
<feature type="turn" evidence="35">
    <location>
        <begin position="286"/>
        <end position="290"/>
    </location>
</feature>
<feature type="strand" evidence="33">
    <location>
        <begin position="292"/>
        <end position="294"/>
    </location>
</feature>
<feature type="helix" evidence="33">
    <location>
        <begin position="297"/>
        <end position="306"/>
    </location>
</feature>
<feature type="helix" evidence="33">
    <location>
        <begin position="309"/>
        <end position="315"/>
    </location>
</feature>
<feature type="helix" evidence="33">
    <location>
        <begin position="316"/>
        <end position="319"/>
    </location>
</feature>
<feature type="strand" evidence="33">
    <location>
        <begin position="320"/>
        <end position="322"/>
    </location>
</feature>
<feature type="strand" evidence="39">
    <location>
        <begin position="325"/>
        <end position="327"/>
    </location>
</feature>
<feature type="strand" evidence="33">
    <location>
        <begin position="333"/>
        <end position="341"/>
    </location>
</feature>
<feature type="helix" evidence="33">
    <location>
        <begin position="343"/>
        <end position="349"/>
    </location>
</feature>
<feature type="strand" evidence="33">
    <location>
        <begin position="356"/>
        <end position="362"/>
    </location>
</feature>
<feature type="strand" evidence="36">
    <location>
        <begin position="364"/>
        <end position="366"/>
    </location>
</feature>
<feature type="helix" evidence="33">
    <location>
        <begin position="367"/>
        <end position="370"/>
    </location>
</feature>
<feature type="turn" evidence="33">
    <location>
        <begin position="371"/>
        <end position="373"/>
    </location>
</feature>
<feature type="strand" evidence="34">
    <location>
        <begin position="379"/>
        <end position="381"/>
    </location>
</feature>
<feature type="helix" evidence="33">
    <location>
        <begin position="387"/>
        <end position="397"/>
    </location>
</feature>
<feature type="helix" evidence="33">
    <location>
        <begin position="403"/>
        <end position="413"/>
    </location>
</feature>
<feature type="strand" evidence="38">
    <location>
        <begin position="418"/>
        <end position="420"/>
    </location>
</feature>
<feature type="helix" evidence="33">
    <location>
        <begin position="422"/>
        <end position="437"/>
    </location>
</feature>
<feature type="helix" evidence="33">
    <location>
        <begin position="439"/>
        <end position="451"/>
    </location>
</feature>
<feature type="strand" evidence="33">
    <location>
        <begin position="455"/>
        <end position="461"/>
    </location>
</feature>
<feature type="helix" evidence="33">
    <location>
        <begin position="472"/>
        <end position="474"/>
    </location>
</feature>
<feature type="turn" evidence="33">
    <location>
        <begin position="478"/>
        <end position="481"/>
    </location>
</feature>
<feature type="helix" evidence="33">
    <location>
        <begin position="482"/>
        <end position="485"/>
    </location>
</feature>
<feature type="helix" evidence="33">
    <location>
        <begin position="488"/>
        <end position="490"/>
    </location>
</feature>
<feature type="strand" evidence="40">
    <location>
        <begin position="491"/>
        <end position="494"/>
    </location>
</feature>
<feature type="helix" evidence="33">
    <location>
        <begin position="498"/>
        <end position="517"/>
    </location>
</feature>
<feature type="strand" evidence="37">
    <location>
        <begin position="526"/>
        <end position="528"/>
    </location>
</feature>
<feature type="turn" evidence="33">
    <location>
        <begin position="536"/>
        <end position="538"/>
    </location>
</feature>
<feature type="strand" evidence="33">
    <location>
        <begin position="540"/>
        <end position="547"/>
    </location>
</feature>
<feature type="strand" evidence="33">
    <location>
        <begin position="550"/>
        <end position="553"/>
    </location>
</feature>
<feature type="helix" evidence="33">
    <location>
        <begin position="557"/>
        <end position="564"/>
    </location>
</feature>
<feature type="helix" evidence="33">
    <location>
        <begin position="567"/>
        <end position="572"/>
    </location>
</feature>
<feature type="helix" evidence="31">
    <location>
        <begin position="580"/>
        <end position="601"/>
    </location>
</feature>
<feature type="lipid moiety-binding region" description="GPI-anchor amidated glycine" evidence="6">
    <location sequence="P22303-2">
        <position position="588"/>
    </location>
</feature>
<feature type="sequence conflict" description="In Ref. 9; AAI43470." evidence="18" ref="9">
    <original>P</original>
    <variation>R</variation>
    <location sequence="P22303-2">
        <position position="592"/>
    </location>
</feature>
<proteinExistence type="evidence at protein level"/>
<gene>
    <name evidence="20" type="primary">ACHE</name>
</gene>
<accession>P22303</accession>
<accession>A4D2E2</accession>
<accession>B7ZKZ0</accession>
<accession>D6W5X7</accession>
<accession>Q16169</accession>
<accession>Q29S23</accession>
<accession>Q2M324</accession>
<accession>Q504V3</accession>
<accession>Q53F46</accession>
<accession>Q86TM9</accession>
<accession>Q86YX9</accession>
<accession>Q9BXP7</accession>
<sequence>MRPPQCLLHTPSLASPLLLLLLWLLGGGVGAEGREDAELLVTVRGGRLRGIRLKTPGGPVSAFLGIPFAEPPMGPRRFLPPEPKQPWSGVVDATTFQSVCYQYVDTLYPGFEGTEMWNPNRELSEDCLYLNVWTPYPRPTSPTPVLVWIYGGGFYSGASSLDVYDGRFLVQAERTVLVSMNYRVGAFGFLALPGSREAPGNVGLLDQRLALQWVQENVAAFGGDPTSVTLFGESAGAASVGMHLLSPPSRGLFHRAVLQSGAPNGPWATVGMGEARRRATQLAHLVGCPPGGTGGNDTELVACLRTRPAQVLVNHEWHVLPQESVFRFSFVPVVDGDFLSDTPEALINAGDFHGLQVLVGVVKDEGSYFLVYGAPGFSKDNESLISRAEFLAGVRVGVPQVSDLAAEAVVLHYTDWLHPEDPARLREALSDVVGDHNVVCPVAQLAGRLAAQGARVYAYVFEHRASTLSWPLWMGVPHGYEIEFIFGIPLDPSRNYTAEEKIFAQRLMRYWANFARTGDPNEPRDPKAPQWPPYTAGAQQYVSLDLRPLEVRRGLRAQACAFWNRFLPKLLSATDTLDEAERQWKAEFHRWSSYMVHWKNQFDHYSKQDRCSDL</sequence>
<comment type="function">
    <text evidence="4 5 8 12">Hydrolyzes rapidly the acetylcholine neurotransmitter released into the synaptic cleft allowing to terminate the signal transduction at the neuromuscular junction. Role in neuronal apoptosis.</text>
</comment>
<comment type="catalytic activity">
    <reaction evidence="5">
        <text>acetylcholine + H2O = choline + acetate + H(+)</text>
        <dbReference type="Rhea" id="RHEA:17561"/>
        <dbReference type="ChEBI" id="CHEBI:15354"/>
        <dbReference type="ChEBI" id="CHEBI:15355"/>
        <dbReference type="ChEBI" id="CHEBI:15377"/>
        <dbReference type="ChEBI" id="CHEBI:15378"/>
        <dbReference type="ChEBI" id="CHEBI:30089"/>
        <dbReference type="EC" id="3.1.1.7"/>
    </reaction>
    <physiologicalReaction direction="left-to-right" evidence="19">
        <dbReference type="Rhea" id="RHEA:17562"/>
    </physiologicalReaction>
</comment>
<comment type="subunit">
    <text evidence="1 3 7">Interacts with PRIMA1. The interaction with PRIMA1 is required to anchor it to the basal lamina of cells and organize into tetramers (By similarity). Isoform H generates GPI-anchored dimers; disulfide linked. Isoform T generates multiple structures, ranging from monomers and dimers to collagen-tailed and hydrophobic-tailed forms, in which catalytic tetramers are associated with anchoring proteins that attach them to the basal lamina or to cell membranes. In the collagen-tailed forms, isoform T subunits are associated with a specific collagen, COLQ, which triggers the formation of isoform T tetramers, from monomers and dimers. Isoform R may be monomeric.</text>
</comment>
<comment type="interaction">
    <interactant intactId="EBI-1637793">
        <id>P22303</id>
    </interactant>
    <interactant intactId="EBI-1637847">
        <id>Q9Y215</id>
        <label>COLQ</label>
    </interactant>
    <organismsDiffer>false</organismsDiffer>
    <experiments>2</experiments>
</comment>
<comment type="interaction">
    <interactant intactId="EBI-1637793">
        <id>P22303</id>
    </interactant>
    <interactant intactId="EBI-353877">
        <id>P06733</id>
        <label>ENO1</label>
    </interactant>
    <organismsDiffer>false</organismsDiffer>
    <experiments>2</experiments>
</comment>
<comment type="interaction">
    <interactant intactId="EBI-1637793">
        <id>P22303</id>
    </interactant>
    <interactant intactId="EBI-296739">
        <id>P63244</id>
        <label>RACK1</label>
    </interactant>
    <organismsDiffer>false</organismsDiffer>
    <experiments>2</experiments>
</comment>
<comment type="subcellular location">
    <subcellularLocation>
        <location evidence="4 8">Synapse</location>
    </subcellularLocation>
    <subcellularLocation>
        <location evidence="1">Secreted</location>
    </subcellularLocation>
    <subcellularLocation>
        <location evidence="1">Cell membrane</location>
        <topology evidence="1">Peripheral membrane protein</topology>
    </subcellularLocation>
</comment>
<comment type="subcellular location">
    <molecule>Isoform T</molecule>
    <subcellularLocation>
        <location>Nucleus</location>
    </subcellularLocation>
    <text>Only observed in apoptotic nuclei.</text>
</comment>
<comment type="subcellular location">
    <molecule>Isoform H</molecule>
    <subcellularLocation>
        <location evidence="1">Cell membrane</location>
        <topology evidence="1">Lipid-anchor</topology>
        <topology evidence="1">GPI-anchor</topology>
        <orientation evidence="1">Extracellular side</orientation>
    </subcellularLocation>
</comment>
<comment type="alternative products">
    <event type="alternative splicing"/>
    <isoform>
        <id>P22303-1</id>
        <name>T</name>
        <name>ACHE-S</name>
        <name>synaptic</name>
        <sequence type="displayed"/>
    </isoform>
    <isoform>
        <id>P22303-2</id>
        <name>H</name>
        <name>ACHE-E</name>
        <name>erythrocytic</name>
        <name>E4-E5</name>
        <sequence type="described" ref="VSP_001457"/>
    </isoform>
    <isoform>
        <id>P22303-4</id>
        <name>R</name>
        <name>ACHE-R</name>
        <name>readthrough</name>
        <sequence type="described" ref="VSP_035569 VSP_035570"/>
    </isoform>
    <isoform>
        <id>P22303-3</id>
        <name>4</name>
        <sequence type="described" ref="VSP_035568"/>
    </isoform>
</comment>
<comment type="tissue specificity">
    <text evidence="12">Isoform H is highly expressed in erythrocytes.</text>
</comment>
<comment type="polymorphism">
    <text>ACHE is responsible for the Yt blood group system [MIM:112100]. The molecular basis of the Yt(a)=Yt1/Yt(b)=Yt2 blood group antigens is a single variation in position 353; His-353 corresponds to Yt(a) and the rare variant with Asn-353 to Yt(b).</text>
</comment>
<comment type="similarity">
    <text evidence="18">Belongs to the type-B carboxylesterase/lipase family.</text>
</comment>
<comment type="online information" name="Wikipedia">
    <link uri="https://en.wikipedia.org/wiki/Acetylcholinesterase"/>
    <text>Acetylcholinesterase entry</text>
</comment>
<comment type="online information" name="Atlas of Genetics and Cytogenetics in Oncology and Haematology">
    <link uri="https://atlasgeneticsoncology.org/gene/44317/ACHE"/>
</comment>
<reference key="1">
    <citation type="journal article" date="1990" name="Proc. Natl. Acad. Sci. U.S.A.">
        <title>Molecular cloning and construction of the coding region for human acetylcholinesterase reveals a G + C-rich attenuating structure.</title>
        <authorList>
            <person name="Soreq H."/>
            <person name="Ben-Aziz R."/>
            <person name="Prody C.A."/>
            <person name="Seidman S."/>
            <person name="Gnatt A."/>
            <person name="Neville L."/>
            <person name="Lieman-Hurwitz J."/>
            <person name="Lev-Lehman E."/>
            <person name="Ginzberg D."/>
            <person name="Lipidot-Lifson Y."/>
            <person name="Zakut H."/>
        </authorList>
    </citation>
    <scope>NUCLEOTIDE SEQUENCE [MRNA] (ISOFORM T)</scope>
</reference>
<reference key="2">
    <citation type="journal article" date="1994" name="Exp. Cell Res.">
        <title>Expression of three alternative acetylcholinesterase messenger RNAs in human tumor cell lines of different tissue origins.</title>
        <authorList>
            <person name="Karpel R."/>
            <person name="Ben Aziz-Aloya R."/>
            <person name="Sternfeld M."/>
            <person name="Ehrlich G."/>
            <person name="Ginzberg D."/>
            <person name="Tarroni P."/>
            <person name="Clementi F."/>
            <person name="Zakut H."/>
            <person name="Soreq H."/>
        </authorList>
    </citation>
    <scope>NUCLEOTIDE SEQUENCE [MRNA] (ISOFORMS H; R AND T)</scope>
</reference>
<reference key="3">
    <citation type="submission" date="2001-01" db="EMBL/GenBank/DDBJ databases">
        <authorList>
            <person name="Yang L."/>
            <person name="Zhang X.J."/>
        </authorList>
    </citation>
    <scope>NUCLEOTIDE SEQUENCE [MRNA] (ISOFORM 4)</scope>
</reference>
<reference key="4">
    <citation type="journal article" date="2004" name="Nat. Genet.">
        <title>Complete sequencing and characterization of 21,243 full-length human cDNAs.</title>
        <authorList>
            <person name="Ota T."/>
            <person name="Suzuki Y."/>
            <person name="Nishikawa T."/>
            <person name="Otsuki T."/>
            <person name="Sugiyama T."/>
            <person name="Irie R."/>
            <person name="Wakamatsu A."/>
            <person name="Hayashi K."/>
            <person name="Sato H."/>
            <person name="Nagai K."/>
            <person name="Kimura K."/>
            <person name="Makita H."/>
            <person name="Sekine M."/>
            <person name="Obayashi M."/>
            <person name="Nishi T."/>
            <person name="Shibahara T."/>
            <person name="Tanaka T."/>
            <person name="Ishii S."/>
            <person name="Yamamoto J."/>
            <person name="Saito K."/>
            <person name="Kawai Y."/>
            <person name="Isono Y."/>
            <person name="Nakamura Y."/>
            <person name="Nagahari K."/>
            <person name="Murakami K."/>
            <person name="Yasuda T."/>
            <person name="Iwayanagi T."/>
            <person name="Wagatsuma M."/>
            <person name="Shiratori A."/>
            <person name="Sudo H."/>
            <person name="Hosoiri T."/>
            <person name="Kaku Y."/>
            <person name="Kodaira H."/>
            <person name="Kondo H."/>
            <person name="Sugawara M."/>
            <person name="Takahashi M."/>
            <person name="Kanda K."/>
            <person name="Yokoi T."/>
            <person name="Furuya T."/>
            <person name="Kikkawa E."/>
            <person name="Omura Y."/>
            <person name="Abe K."/>
            <person name="Kamihara K."/>
            <person name="Katsuta N."/>
            <person name="Sato K."/>
            <person name="Tanikawa M."/>
            <person name="Yamazaki M."/>
            <person name="Ninomiya K."/>
            <person name="Ishibashi T."/>
            <person name="Yamashita H."/>
            <person name="Murakawa K."/>
            <person name="Fujimori K."/>
            <person name="Tanai H."/>
            <person name="Kimata M."/>
            <person name="Watanabe M."/>
            <person name="Hiraoka S."/>
            <person name="Chiba Y."/>
            <person name="Ishida S."/>
            <person name="Ono Y."/>
            <person name="Takiguchi S."/>
            <person name="Watanabe S."/>
            <person name="Yosida M."/>
            <person name="Hotuta T."/>
            <person name="Kusano J."/>
            <person name="Kanehori K."/>
            <person name="Takahashi-Fujii A."/>
            <person name="Hara H."/>
            <person name="Tanase T.-O."/>
            <person name="Nomura Y."/>
            <person name="Togiya S."/>
            <person name="Komai F."/>
            <person name="Hara R."/>
            <person name="Takeuchi K."/>
            <person name="Arita M."/>
            <person name="Imose N."/>
            <person name="Musashino K."/>
            <person name="Yuuki H."/>
            <person name="Oshima A."/>
            <person name="Sasaki N."/>
            <person name="Aotsuka S."/>
            <person name="Yoshikawa Y."/>
            <person name="Matsunawa H."/>
            <person name="Ichihara T."/>
            <person name="Shiohata N."/>
            <person name="Sano S."/>
            <person name="Moriya S."/>
            <person name="Momiyama H."/>
            <person name="Satoh N."/>
            <person name="Takami S."/>
            <person name="Terashima Y."/>
            <person name="Suzuki O."/>
            <person name="Nakagawa S."/>
            <person name="Senoh A."/>
            <person name="Mizoguchi H."/>
            <person name="Goto Y."/>
            <person name="Shimizu F."/>
            <person name="Wakebe H."/>
            <person name="Hishigaki H."/>
            <person name="Watanabe T."/>
            <person name="Sugiyama A."/>
            <person name="Takemoto M."/>
            <person name="Kawakami B."/>
            <person name="Yamazaki M."/>
            <person name="Watanabe K."/>
            <person name="Kumagai A."/>
            <person name="Itakura S."/>
            <person name="Fukuzumi Y."/>
            <person name="Fujimori Y."/>
            <person name="Komiyama M."/>
            <person name="Tashiro H."/>
            <person name="Tanigami A."/>
            <person name="Fujiwara T."/>
            <person name="Ono T."/>
            <person name="Yamada K."/>
            <person name="Fujii Y."/>
            <person name="Ozaki K."/>
            <person name="Hirao M."/>
            <person name="Ohmori Y."/>
            <person name="Kawabata A."/>
            <person name="Hikiji T."/>
            <person name="Kobatake N."/>
            <person name="Inagaki H."/>
            <person name="Ikema Y."/>
            <person name="Okamoto S."/>
            <person name="Okitani R."/>
            <person name="Kawakami T."/>
            <person name="Noguchi S."/>
            <person name="Itoh T."/>
            <person name="Shigeta K."/>
            <person name="Senba T."/>
            <person name="Matsumura K."/>
            <person name="Nakajima Y."/>
            <person name="Mizuno T."/>
            <person name="Morinaga M."/>
            <person name="Sasaki M."/>
            <person name="Togashi T."/>
            <person name="Oyama M."/>
            <person name="Hata H."/>
            <person name="Watanabe M."/>
            <person name="Komatsu T."/>
            <person name="Mizushima-Sugano J."/>
            <person name="Satoh T."/>
            <person name="Shirai Y."/>
            <person name="Takahashi Y."/>
            <person name="Nakagawa K."/>
            <person name="Okumura K."/>
            <person name="Nagase T."/>
            <person name="Nomura N."/>
            <person name="Kikuchi H."/>
            <person name="Masuho Y."/>
            <person name="Yamashita R."/>
            <person name="Nakai K."/>
            <person name="Yada T."/>
            <person name="Nakamura Y."/>
            <person name="Ohara O."/>
            <person name="Isogai T."/>
            <person name="Sugano S."/>
        </authorList>
    </citation>
    <scope>NUCLEOTIDE SEQUENCE [LARGE SCALE MRNA] (ISOFORM T)</scope>
</reference>
<reference key="5">
    <citation type="submission" date="2005-04" db="EMBL/GenBank/DDBJ databases">
        <authorList>
            <person name="Totoki Y."/>
            <person name="Toyoda A."/>
            <person name="Takeda T."/>
            <person name="Sakaki Y."/>
            <person name="Tanaka A."/>
            <person name="Yokoyama S."/>
        </authorList>
    </citation>
    <scope>NUCLEOTIDE SEQUENCE [LARGE SCALE MRNA] (ISOFORM T)</scope>
    <source>
        <tissue>Brain</tissue>
    </source>
</reference>
<reference key="6">
    <citation type="submission" date="2004-09" db="EMBL/GenBank/DDBJ databases">
        <authorList>
            <consortium name="SeattleSNPs variation discovery resource"/>
        </authorList>
    </citation>
    <scope>NUCLEOTIDE SEQUENCE [GENOMIC DNA]</scope>
    <scope>VARIANTS GLN-34; ALA-135 AND ASN-353</scope>
</reference>
<reference key="7">
    <citation type="journal article" date="2003" name="Nature">
        <title>The DNA sequence of human chromosome 7.</title>
        <authorList>
            <person name="Hillier L.W."/>
            <person name="Fulton R.S."/>
            <person name="Fulton L.A."/>
            <person name="Graves T.A."/>
            <person name="Pepin K.H."/>
            <person name="Wagner-McPherson C."/>
            <person name="Layman D."/>
            <person name="Maas J."/>
            <person name="Jaeger S."/>
            <person name="Walker R."/>
            <person name="Wylie K."/>
            <person name="Sekhon M."/>
            <person name="Becker M.C."/>
            <person name="O'Laughlin M.D."/>
            <person name="Schaller M.E."/>
            <person name="Fewell G.A."/>
            <person name="Delehaunty K.D."/>
            <person name="Miner T.L."/>
            <person name="Nash W.E."/>
            <person name="Cordes M."/>
            <person name="Du H."/>
            <person name="Sun H."/>
            <person name="Edwards J."/>
            <person name="Bradshaw-Cordum H."/>
            <person name="Ali J."/>
            <person name="Andrews S."/>
            <person name="Isak A."/>
            <person name="Vanbrunt A."/>
            <person name="Nguyen C."/>
            <person name="Du F."/>
            <person name="Lamar B."/>
            <person name="Courtney L."/>
            <person name="Kalicki J."/>
            <person name="Ozersky P."/>
            <person name="Bielicki L."/>
            <person name="Scott K."/>
            <person name="Holmes A."/>
            <person name="Harkins R."/>
            <person name="Harris A."/>
            <person name="Strong C.M."/>
            <person name="Hou S."/>
            <person name="Tomlinson C."/>
            <person name="Dauphin-Kohlberg S."/>
            <person name="Kozlowicz-Reilly A."/>
            <person name="Leonard S."/>
            <person name="Rohlfing T."/>
            <person name="Rock S.M."/>
            <person name="Tin-Wollam A.-M."/>
            <person name="Abbott A."/>
            <person name="Minx P."/>
            <person name="Maupin R."/>
            <person name="Strowmatt C."/>
            <person name="Latreille P."/>
            <person name="Miller N."/>
            <person name="Johnson D."/>
            <person name="Murray J."/>
            <person name="Woessner J.P."/>
            <person name="Wendl M.C."/>
            <person name="Yang S.-P."/>
            <person name="Schultz B.R."/>
            <person name="Wallis J.W."/>
            <person name="Spieth J."/>
            <person name="Bieri T.A."/>
            <person name="Nelson J.O."/>
            <person name="Berkowicz N."/>
            <person name="Wohldmann P.E."/>
            <person name="Cook L.L."/>
            <person name="Hickenbotham M.T."/>
            <person name="Eldred J."/>
            <person name="Williams D."/>
            <person name="Bedell J.A."/>
            <person name="Mardis E.R."/>
            <person name="Clifton S.W."/>
            <person name="Chissoe S.L."/>
            <person name="Marra M.A."/>
            <person name="Raymond C."/>
            <person name="Haugen E."/>
            <person name="Gillett W."/>
            <person name="Zhou Y."/>
            <person name="James R."/>
            <person name="Phelps K."/>
            <person name="Iadanoto S."/>
            <person name="Bubb K."/>
            <person name="Simms E."/>
            <person name="Levy R."/>
            <person name="Clendenning J."/>
            <person name="Kaul R."/>
            <person name="Kent W.J."/>
            <person name="Furey T.S."/>
            <person name="Baertsch R.A."/>
            <person name="Brent M.R."/>
            <person name="Keibler E."/>
            <person name="Flicek P."/>
            <person name="Bork P."/>
            <person name="Suyama M."/>
            <person name="Bailey J.A."/>
            <person name="Portnoy M.E."/>
            <person name="Torrents D."/>
            <person name="Chinwalla A.T."/>
            <person name="Gish W.R."/>
            <person name="Eddy S.R."/>
            <person name="McPherson J.D."/>
            <person name="Olson M.V."/>
            <person name="Eichler E.E."/>
            <person name="Green E.D."/>
            <person name="Waterston R.H."/>
            <person name="Wilson R.K."/>
        </authorList>
    </citation>
    <scope>NUCLEOTIDE SEQUENCE [LARGE SCALE GENOMIC DNA]</scope>
</reference>
<reference key="8">
    <citation type="submission" date="2005-09" db="EMBL/GenBank/DDBJ databases">
        <authorList>
            <person name="Mural R.J."/>
            <person name="Istrail S."/>
            <person name="Sutton G.G."/>
            <person name="Florea L."/>
            <person name="Halpern A.L."/>
            <person name="Mobarry C.M."/>
            <person name="Lippert R."/>
            <person name="Walenz B."/>
            <person name="Shatkay H."/>
            <person name="Dew I."/>
            <person name="Miller J.R."/>
            <person name="Flanigan M.J."/>
            <person name="Edwards N.J."/>
            <person name="Bolanos R."/>
            <person name="Fasulo D."/>
            <person name="Halldorsson B.V."/>
            <person name="Hannenhalli S."/>
            <person name="Turner R."/>
            <person name="Yooseph S."/>
            <person name="Lu F."/>
            <person name="Nusskern D.R."/>
            <person name="Shue B.C."/>
            <person name="Zheng X.H."/>
            <person name="Zhong F."/>
            <person name="Delcher A.L."/>
            <person name="Huson D.H."/>
            <person name="Kravitz S.A."/>
            <person name="Mouchard L."/>
            <person name="Reinert K."/>
            <person name="Remington K.A."/>
            <person name="Clark A.G."/>
            <person name="Waterman M.S."/>
            <person name="Eichler E.E."/>
            <person name="Adams M.D."/>
            <person name="Hunkapiller M.W."/>
            <person name="Myers E.W."/>
            <person name="Venter J.C."/>
        </authorList>
    </citation>
    <scope>NUCLEOTIDE SEQUENCE [LARGE SCALE GENOMIC DNA]</scope>
</reference>
<reference key="9">
    <citation type="journal article" date="2004" name="Genome Res.">
        <title>The status, quality, and expansion of the NIH full-length cDNA project: the Mammalian Gene Collection (MGC).</title>
        <authorList>
            <consortium name="The MGC Project Team"/>
        </authorList>
    </citation>
    <scope>NUCLEOTIDE SEQUENCE [LARGE SCALE MRNA] (ISOFORM H)</scope>
    <scope>NUCLEOTIDE SEQUENCE [LARGE SCALE MRNA] OF 1-546 (ISOFORMS H/R/T)</scope>
    <scope>GPI-ANCHOR AT GLY-588 (ISOFORM H)</scope>
    <source>
        <tissue>Cerebellum</tissue>
        <tissue>Hippocampus</tissue>
    </source>
</reference>
<reference key="10">
    <citation type="journal article" date="2001" name="Nucleic Acids Res.">
        <title>Comparative analysis of the gene-dense ACHE/TFR2 region on human chromosome 7q22 with the orthologous region on mouse chromosome 5.</title>
        <authorList>
            <person name="Wilson M.D."/>
            <person name="Riemer C."/>
            <person name="Martindale D.W."/>
            <person name="Schnupf P."/>
            <person name="Boright A.P."/>
            <person name="Cheung T.L."/>
            <person name="Hardy D.M."/>
            <person name="Schwartz S."/>
            <person name="Scherer S.W."/>
            <person name="Tsui L.-C."/>
            <person name="Miller W."/>
            <person name="Koop B.F."/>
        </authorList>
    </citation>
    <scope>NUCLEOTIDE SEQUENCE [GENOMIC DNA] OF 521-614</scope>
</reference>
<reference key="11">
    <citation type="journal article" date="1989" name="FEBS Lett.">
        <title>Purification and partial amino acid sequence analysis of human erythrocyte acetylcholinesterase.</title>
        <authorList>
            <person name="Chhajlani V."/>
            <person name="Derr D."/>
            <person name="Earles B."/>
            <person name="Schmell E."/>
            <person name="August T."/>
        </authorList>
    </citation>
    <scope>PROTEIN SEQUENCE OF 256-273; 306-326; 396-422; 465-480 AND 528-551</scope>
    <scope>FUNCTION</scope>
    <scope>TISSUE SPECIFICITY</scope>
    <source>
        <tissue>Erythrocyte</tissue>
    </source>
</reference>
<reference key="12">
    <citation type="journal article" date="1991" name="J. Biol. Chem.">
        <title>The effect of elimination of intersubunit disulfide bonds on the activity, assembly, and secretion of recombinant human acetylcholinesterase. Expression of acetylcholinesterase Cys-580--&gt;Ala mutant.</title>
        <authorList>
            <person name="Velan B."/>
            <person name="Grosfeld H."/>
            <person name="Kronman C."/>
            <person name="Leitner M."/>
            <person name="Gozes Y."/>
            <person name="Lazar A."/>
            <person name="Flashner Y."/>
            <person name="Marcus D."/>
            <person name="Cohen S."/>
            <person name="Shafferman A."/>
        </authorList>
    </citation>
    <scope>FUNCTION</scope>
    <scope>SUBCELLULAR LOCATION</scope>
    <scope>MUTAGENESIS OF CYS-611</scope>
</reference>
<reference key="13">
    <citation type="journal article" date="1992" name="J. Biol. Chem.">
        <title>Mutagenesis of human acetylcholinesterase. Identification of residues involved in catalytic activity and in polypeptide folding.</title>
        <authorList>
            <person name="Shafferman A."/>
            <person name="Kronman C."/>
            <person name="Flashner Y."/>
            <person name="Leitner M."/>
            <person name="Grosfeld H."/>
            <person name="Ordentlich A."/>
            <person name="Gozes Y."/>
            <person name="Cohen S."/>
            <person name="Ariel N."/>
            <person name="Barak D."/>
        </authorList>
    </citation>
    <scope>FUNCTION</scope>
    <scope>MUTAGENESIS OF ASP-206; SER-234; GLU-365; ASP-435 AND HIS-478</scope>
    <scope>CATALYTIC ACTIVITY</scope>
</reference>
<reference key="14">
    <citation type="journal article" date="2002" name="Neurosci. Res.">
        <title>Increased expression of intranuclear AChE involved in apoptosis of SK-N-SH cells.</title>
        <authorList>
            <person name="Yang L."/>
            <person name="He H.Y."/>
            <person name="Zhang X.J."/>
        </authorList>
    </citation>
    <scope>FUNCTION</scope>
    <scope>SUBCELLULAR LOCATION</scope>
</reference>
<reference key="15">
    <citation type="journal article" date="1997" name="J. Mol. Graph. Model.">
        <title>External and internal electrostatic potentials of cholinesterase models.</title>
        <authorList>
            <person name="Felder C.E."/>
            <person name="Botti S.A."/>
            <person name="Lifson S."/>
            <person name="Silman I."/>
            <person name="Sussman J.L."/>
        </authorList>
    </citation>
    <scope>3D-STRUCTURE MODELING OF 35-574</scope>
</reference>
<reference evidence="21 22" key="16">
    <citation type="journal article" date="2000" name="Acta Crystallogr. D">
        <title>Structures of recombinant native and E202Q mutant human acetylcholinesterase complexed with the snake-venom toxin fasciculin-II.</title>
        <authorList>
            <person name="Kryger G."/>
            <person name="Harel M."/>
            <person name="Giles K."/>
            <person name="Toker L."/>
            <person name="Velan B."/>
            <person name="Lazar A."/>
            <person name="Kronman C."/>
            <person name="Barak D."/>
            <person name="Ariel N."/>
            <person name="Shafferman A."/>
            <person name="Silman I."/>
            <person name="Sussman J.L."/>
        </authorList>
    </citation>
    <scope>X-RAY CRYSTALLOGRAPHY (2.9 ANGSTROMS) OF 32-614 IN COMPLEX WITH FASCICULIN-2</scope>
    <scope>GLYCOSYLATION AT ASN-381</scope>
    <scope>DISULFIDE BOND</scope>
</reference>
<reference evidence="23" key="17">
    <citation type="journal article" date="2004" name="EMBO J.">
        <title>The synaptic acetylcholinesterase tetramer assembles around a polyproline II helix.</title>
        <authorList>
            <person name="Dvir H."/>
            <person name="Harel M."/>
            <person name="Bon S."/>
            <person name="Liu W.-Q."/>
            <person name="Vidal M."/>
            <person name="Garbay C."/>
            <person name="Sussman J.L."/>
            <person name="Massoulie J."/>
            <person name="Silman I."/>
        </authorList>
    </citation>
    <scope>X-RAY CRYSTALLOGRAPHY (2.35 ANGSTROMS) OF 575-614 IN COMPLEX WITH COLQ</scope>
</reference>
<reference key="18">
    <citation type="journal article" date="2010" name="J. Med. Chem.">
        <title>Structural evidence that human acetylcholinesterase inhibited by tabun ages through O-dealkylation.</title>
        <authorList>
            <person name="Carletti E."/>
            <person name="Colletier J.P."/>
            <person name="Dupeux F."/>
            <person name="Trovaslet M."/>
            <person name="Masson P."/>
            <person name="Nachon F."/>
        </authorList>
    </citation>
    <scope>X-RAY CRYSTALLOGRAPHY (2.95 ANGSTROMS) OF COMPLEX WITH FASCICULIN-2</scope>
    <scope>DISULFIDE BOND</scope>
    <scope>GLYCOSYLATION AT ASN-381</scope>
</reference>
<reference key="19">
    <citation type="journal article" date="2012" name="J. Med. Chem.">
        <title>Structures of human acetylcholinesterase in complex with pharmacologically important ligands.</title>
        <authorList>
            <person name="Cheung J."/>
            <person name="Rudolph M.J."/>
            <person name="Burshteyn F."/>
            <person name="Cassidy M.S."/>
            <person name="Gary E.N."/>
            <person name="Love J."/>
            <person name="Franklin M.C."/>
            <person name="Height J.J."/>
        </authorList>
    </citation>
    <scope>X-RAY CRYSTALLOGRAPHY (2.60 ANGSTROMS) OF 35-573 IN COMPLEX WITH FASCICULIN-2; HUPERZINE A; GALANTAMINE AND DONEPEZIL</scope>
    <scope>GLYCOSYLATION AT ASN-296; ASN-381 AND ASN-495</scope>
    <scope>DISULFIDE BOND</scope>
</reference>
<reference key="20">
    <citation type="journal article" date="2013" name="Biochem. J.">
        <title>Crystal structures of human cholinesterases in complex with huprine W and tacrine: elements of specificity for anti-Alzheimer's drugs targeting acetyl- and butyryl-cholinesterase.</title>
        <authorList>
            <person name="Nachon F."/>
            <person name="Carletti E."/>
            <person name="Ronco C."/>
            <person name="Trovaslet M."/>
            <person name="Nicolet Y."/>
            <person name="Jean L."/>
            <person name="Renard P.Y."/>
        </authorList>
    </citation>
    <scope>X-RAY CRYSTALLOGRAPHY (3.10 ANGSTROMS) OF 36-598 IN COMPLEX WITH FASCICULIN-2 AND HUPRINE W</scope>
    <scope>DISULFIDE BOND</scope>
    <scope>GLYCOSYLATION AT ASN-381</scope>
</reference>
<reference key="21">
    <citation type="journal article" date="1993" name="Am. J. Hum. Genet.">
        <title>Mutation at codon 322 in the human acetylcholinesterase (ACHE) gene accounts for YT blood group polymorphism.</title>
        <authorList>
            <person name="Bartels C.F."/>
            <person name="Zelinski T."/>
            <person name="Lockridge O."/>
        </authorList>
    </citation>
    <scope>VARIANT BLOOD GROUP YT(B) ASN-353</scope>
</reference>
<keyword id="KW-0002">3D-structure</keyword>
<keyword id="KW-0025">Alternative splicing</keyword>
<keyword id="KW-0095">Blood group antigen</keyword>
<keyword id="KW-1003">Cell membrane</keyword>
<keyword id="KW-0903">Direct protein sequencing</keyword>
<keyword id="KW-1015">Disulfide bond</keyword>
<keyword id="KW-0325">Glycoprotein</keyword>
<keyword id="KW-0336">GPI-anchor</keyword>
<keyword id="KW-0378">Hydrolase</keyword>
<keyword id="KW-0449">Lipoprotein</keyword>
<keyword id="KW-0472">Membrane</keyword>
<keyword id="KW-0531">Neurotransmitter degradation</keyword>
<keyword id="KW-0539">Nucleus</keyword>
<keyword id="KW-1267">Proteomics identification</keyword>
<keyword id="KW-1185">Reference proteome</keyword>
<keyword id="KW-0964">Secreted</keyword>
<keyword id="KW-0719">Serine esterase</keyword>
<keyword id="KW-0732">Signal</keyword>
<keyword id="KW-0770">Synapse</keyword>
<evidence type="ECO:0000250" key="1"/>
<evidence type="ECO:0000255" key="2"/>
<evidence type="ECO:0000269" key="3">
    <source>
    </source>
</evidence>
<evidence type="ECO:0000269" key="4">
    <source>
    </source>
</evidence>
<evidence type="ECO:0000269" key="5">
    <source>
    </source>
</evidence>
<evidence type="ECO:0000269" key="6">
    <source>
    </source>
</evidence>
<evidence type="ECO:0000269" key="7">
    <source>
    </source>
</evidence>
<evidence type="ECO:0000269" key="8">
    <source>
    </source>
</evidence>
<evidence type="ECO:0000269" key="9">
    <source>
    </source>
</evidence>
<evidence type="ECO:0000269" key="10">
    <source>
    </source>
</evidence>
<evidence type="ECO:0000269" key="11">
    <source>
    </source>
</evidence>
<evidence type="ECO:0000269" key="12">
    <source>
    </source>
</evidence>
<evidence type="ECO:0000269" key="13">
    <source>
    </source>
</evidence>
<evidence type="ECO:0000269" key="14">
    <source ref="6"/>
</evidence>
<evidence type="ECO:0000303" key="15">
    <source>
    </source>
</evidence>
<evidence type="ECO:0000303" key="16">
    <source>
    </source>
</evidence>
<evidence type="ECO:0000303" key="17">
    <source ref="3"/>
</evidence>
<evidence type="ECO:0000305" key="18"/>
<evidence type="ECO:0000305" key="19">
    <source>
    </source>
</evidence>
<evidence type="ECO:0000312" key="20">
    <source>
        <dbReference type="HGNC" id="HGNC:108"/>
    </source>
</evidence>
<evidence type="ECO:0007744" key="21">
    <source>
        <dbReference type="PDB" id="1B41"/>
    </source>
</evidence>
<evidence type="ECO:0007744" key="22">
    <source>
        <dbReference type="PDB" id="1F8U"/>
    </source>
</evidence>
<evidence type="ECO:0007744" key="23">
    <source>
        <dbReference type="PDB" id="1VZJ"/>
    </source>
</evidence>
<evidence type="ECO:0007744" key="24">
    <source>
        <dbReference type="PDB" id="2X8B"/>
    </source>
</evidence>
<evidence type="ECO:0007744" key="25">
    <source>
        <dbReference type="PDB" id="4BDT"/>
    </source>
</evidence>
<evidence type="ECO:0007744" key="26">
    <source>
        <dbReference type="PDB" id="4EY4"/>
    </source>
</evidence>
<evidence type="ECO:0007744" key="27">
    <source>
        <dbReference type="PDB" id="4EY5"/>
    </source>
</evidence>
<evidence type="ECO:0007744" key="28">
    <source>
        <dbReference type="PDB" id="4EY6"/>
    </source>
</evidence>
<evidence type="ECO:0007744" key="29">
    <source>
        <dbReference type="PDB" id="4EY7"/>
    </source>
</evidence>
<evidence type="ECO:0007744" key="30">
    <source>
        <dbReference type="PDB" id="4EY8"/>
    </source>
</evidence>
<evidence type="ECO:0007829" key="31">
    <source>
        <dbReference type="PDB" id="1VZJ"/>
    </source>
</evidence>
<evidence type="ECO:0007829" key="32">
    <source>
        <dbReference type="PDB" id="4EY4"/>
    </source>
</evidence>
<evidence type="ECO:0007829" key="33">
    <source>
        <dbReference type="PDB" id="4M0E"/>
    </source>
</evidence>
<evidence type="ECO:0007829" key="34">
    <source>
        <dbReference type="PDB" id="6CQW"/>
    </source>
</evidence>
<evidence type="ECO:0007829" key="35">
    <source>
        <dbReference type="PDB" id="6O5R"/>
    </source>
</evidence>
<evidence type="ECO:0007829" key="36">
    <source>
        <dbReference type="PDB" id="6O69"/>
    </source>
</evidence>
<evidence type="ECO:0007829" key="37">
    <source>
        <dbReference type="PDB" id="6WVQ"/>
    </source>
</evidence>
<evidence type="ECO:0007829" key="38">
    <source>
        <dbReference type="PDB" id="6ZWE"/>
    </source>
</evidence>
<evidence type="ECO:0007829" key="39">
    <source>
        <dbReference type="PDB" id="8AEN"/>
    </source>
</evidence>
<evidence type="ECO:0007829" key="40">
    <source>
        <dbReference type="PDB" id="8AEV"/>
    </source>
</evidence>
<organism>
    <name type="scientific">Homo sapiens</name>
    <name type="common">Human</name>
    <dbReference type="NCBI Taxonomy" id="9606"/>
    <lineage>
        <taxon>Eukaryota</taxon>
        <taxon>Metazoa</taxon>
        <taxon>Chordata</taxon>
        <taxon>Craniata</taxon>
        <taxon>Vertebrata</taxon>
        <taxon>Euteleostomi</taxon>
        <taxon>Mammalia</taxon>
        <taxon>Eutheria</taxon>
        <taxon>Euarchontoglires</taxon>
        <taxon>Primates</taxon>
        <taxon>Haplorrhini</taxon>
        <taxon>Catarrhini</taxon>
        <taxon>Hominidae</taxon>
        <taxon>Homo</taxon>
    </lineage>
</organism>
<name>ACES_HUMAN</name>
<protein>
    <recommendedName>
        <fullName evidence="18">Acetylcholinesterase</fullName>
        <shortName>AChE</shortName>
        <ecNumber evidence="5">3.1.1.7</ecNumber>
    </recommendedName>
</protein>